<comment type="function">
    <text evidence="4 23 28">Cellular myosin that appears to play a role in cytokinesis, cell shape, and specialized functions such as secretion and capping. Required for cortical actin clearance prior to oocyte exocytosis (By similarity). Promotes cell motility in conjunction with S100A4 (PubMed:16707441). During cell spreading, plays an important role in cytoskeleton reorganization, focal contact formation (in the margins but not the central part of spreading cells), and lamellipodial retraction; this function is mechanically antagonized by MYH10 (PubMed:20052411).</text>
</comment>
<comment type="function">
    <text evidence="29 37">(Microbial infection) Acts as a receptor for herpes simplex virus 1/HHV-1 envelope glycoprotein B.</text>
</comment>
<comment type="subunit">
    <text evidence="3 4 21 23 26 30 31 32 34 35">Myosin is a hexameric protein that consists of 2 heavy chain subunits (MHC), 2 alkali light chain subunits (MLC) and 2 regulatory light chain subunits (MLC-2). Interacts with RASIP1 (By similarity). Interacts with DDR1 (By similarity). Interacts with PDLIM2 (By similarity). Interacts with SVIL (PubMed:12917436, PubMed:17925381). Interacts with HTRA3 (PubMed:22229724). Interacts with Myo7a (By similarity). Interacts with CFAP95 (PubMed:28345668). Interacts with LIMCH1; independently of the integration of MYH9 into the myosin complex (PubMed:28228547). Interacts with RAB3A (PubMed:27325790). Interacts with ZBED4 (PubMed:22693546). Interacts with S100A4; this interaction increases cell motility (PubMed:16707441).</text>
</comment>
<comment type="subunit">
    <text evidence="29">(Microbial infection) Interacts with herpes simplex virus 1/HHV-1 envelope glycoprotein B.</text>
</comment>
<comment type="interaction">
    <interactant intactId="EBI-350338">
        <id>P35579</id>
    </interactant>
    <interactant intactId="EBI-489411">
        <id>P61073</id>
        <label>CXCR4</label>
    </interactant>
    <organismsDiffer>false</organismsDiffer>
    <experiments>5</experiments>
</comment>
<comment type="interaction">
    <interactant intactId="EBI-350338">
        <id>P35579</id>
    </interactant>
    <interactant intactId="EBI-447141">
        <id>Q9UJY5</id>
        <label>GGA1</label>
    </interactant>
    <organismsDiffer>false</organismsDiffer>
    <experiments>2</experiments>
</comment>
<comment type="interaction">
    <interactant intactId="EBI-350338">
        <id>P35579</id>
    </interactant>
    <interactant intactId="EBI-401755">
        <id>P62993</id>
        <label>GRB2</label>
    </interactant>
    <organismsDiffer>false</organismsDiffer>
    <experiments>3</experiments>
</comment>
<comment type="interaction">
    <interactant intactId="EBI-350338">
        <id>P35579</id>
    </interactant>
    <interactant intactId="EBI-592789">
        <id>O00255</id>
        <label>MEN1</label>
    </interactant>
    <organismsDiffer>false</organismsDiffer>
    <experiments>3</experiments>
</comment>
<comment type="interaction">
    <interactant intactId="EBI-350338">
        <id>P35579</id>
    </interactant>
    <interactant intactId="EBI-9869387">
        <id>O00255-2</id>
        <label>MEN1</label>
    </interactant>
    <organismsDiffer>false</organismsDiffer>
    <experiments>4</experiments>
</comment>
<comment type="interaction">
    <interactant intactId="EBI-350338">
        <id>P35579</id>
    </interactant>
    <interactant intactId="EBI-350338">
        <id>P35579</id>
        <label>MYH9</label>
    </interactant>
    <organismsDiffer>false</organismsDiffer>
    <experiments>8</experiments>
</comment>
<comment type="interaction">
    <interactant intactId="EBI-350338">
        <id>P35579</id>
    </interactant>
    <interactant intactId="EBI-346967">
        <id>P19338</id>
        <label>NCL</label>
    </interactant>
    <organismsDiffer>false</organismsDiffer>
    <experiments>3</experiments>
</comment>
<comment type="interaction">
    <interactant intactId="EBI-350338">
        <id>P35579</id>
    </interactant>
    <interactant intactId="EBI-743686">
        <id>P23297</id>
        <label>S100A1</label>
    </interactant>
    <organismsDiffer>false</organismsDiffer>
    <experiments>3</experiments>
</comment>
<comment type="interaction">
    <interactant intactId="EBI-350338">
        <id>P35579</id>
    </interactant>
    <interactant intactId="EBI-752230">
        <id>P29034</id>
        <label>S100A2</label>
    </interactant>
    <organismsDiffer>false</organismsDiffer>
    <experiments>2</experiments>
</comment>
<comment type="interaction">
    <interactant intactId="EBI-350338">
        <id>P35579</id>
    </interactant>
    <interactant intactId="EBI-717058">
        <id>P26447</id>
        <label>S100A4</label>
    </interactant>
    <organismsDiffer>false</organismsDiffer>
    <experiments>19</experiments>
</comment>
<comment type="interaction">
    <interactant intactId="EBI-350338">
        <id>P35579</id>
    </interactant>
    <interactant intactId="EBI-7211732">
        <id>P33763</id>
        <label>S100A5</label>
    </interactant>
    <organismsDiffer>false</organismsDiffer>
    <experiments>2</experiments>
</comment>
<comment type="interaction">
    <interactant intactId="EBI-350338">
        <id>P35579</id>
    </interactant>
    <interactant intactId="EBI-352877">
        <id>P06703</id>
        <label>S100A6</label>
    </interactant>
    <organismsDiffer>false</organismsDiffer>
    <experiments>2</experiments>
</comment>
<comment type="interaction">
    <interactant intactId="EBI-350338">
        <id>P35579</id>
    </interactant>
    <interactant intactId="EBI-458391">
        <id>P04271</id>
        <label>S100B</label>
    </interactant>
    <organismsDiffer>false</organismsDiffer>
    <experiments>2</experiments>
</comment>
<comment type="interaction">
    <interactant intactId="EBI-350338">
        <id>P35579</id>
    </interactant>
    <interactant intactId="EBI-743700">
        <id>P25815</id>
        <label>S100P</label>
    </interactant>
    <organismsDiffer>false</organismsDiffer>
    <experiments>3</experiments>
</comment>
<comment type="interaction">
    <interactant intactId="EBI-350338">
        <id>P35579</id>
    </interactant>
    <interactant intactId="EBI-25474821">
        <id>P0DTC2</id>
        <label>S</label>
    </interactant>
    <organismsDiffer>true</organismsDiffer>
    <experiments>8</experiments>
</comment>
<comment type="interaction">
    <interactant intactId="EBI-350338">
        <id>P35579</id>
    </interactant>
    <interactant intactId="EBI-6995105">
        <id>O46385</id>
        <label>SVIL</label>
    </interactant>
    <organismsDiffer>true</organismsDiffer>
    <experiments>2</experiments>
</comment>
<comment type="subcellular location">
    <subcellularLocation>
        <location evidence="31">Cytoplasm</location>
        <location evidence="31">Cytoskeleton</location>
    </subcellularLocation>
    <subcellularLocation>
        <location evidence="4">Cytoplasm</location>
        <location evidence="4">Cell cortex</location>
    </subcellularLocation>
    <subcellularLocation>
        <location evidence="4">Cytoplasmic vesicle</location>
        <location evidence="4">Secretory vesicle</location>
        <location evidence="4">Cortical granule</location>
    </subcellularLocation>
    <subcellularLocation>
        <location>Cell membrane</location>
    </subcellularLocation>
    <text evidence="28 33">Colocalizes with actin filaments at lamellipodia margins and at the leading edge of migrating cells (PubMed:20052411). In retinal pigment epithelial cells, predominantly localized to stress fiber-like structures with some localization to cytoplasmic puncta (PubMed:27331610).</text>
</comment>
<comment type="subcellular location">
    <subcellularLocation>
        <location evidence="29">Cell membrane</location>
    </subcellularLocation>
    <text evidence="29">(Microbial infection) Localizes at the surface of the cell membrane following infection by herpes simplex virus 1/HHV-1,.</text>
</comment>
<comment type="alternative products">
    <event type="alternative splicing"/>
    <isoform>
        <id>P35579-1</id>
        <name>1</name>
        <sequence type="displayed"/>
    </isoform>
    <isoform>
        <id>P35579-2</id>
        <name>2</name>
        <sequence type="described" ref="VSP_035409 VSP_035410"/>
    </isoform>
</comment>
<comment type="tissue specificity">
    <text evidence="14 27">In the kidney, expressed in the glomeruli. Also expressed in leukocytes.</text>
</comment>
<comment type="domain">
    <text>The rodlike tail sequence is highly repetitive, showing cycles of a 28-residue repeat pattern composed of 4 heptapeptides, characteristic for alpha-helical coiled coils.</text>
</comment>
<comment type="PTM">
    <text evidence="22">ISGylated.</text>
</comment>
<comment type="PTM">
    <text evidence="33">Ubiquitination.</text>
</comment>
<comment type="disease" evidence="10 11 13 14 15 16 17 18 19 20 25">
    <disease id="DI-01951">
        <name>Macrothrombocytopenia and granulocyte inclusions with or without nephritis or sensorineural hearing loss</name>
        <acronym>MATINS</acronym>
        <description>An autosomal dominant disorder characterized by thrombocytopenia, giant platelets and Dohle body-like inclusions in peripheral blood leukocytes with variable ultrastructural appearance. Some affected individuals lack leukocyte inclusion bodies on classic staining of peripheral blood smears. Alport syndrome-like features of nephritis, hearing loss, and eye abnormalities are present in some patients.</description>
        <dbReference type="MIM" id="155100"/>
    </disease>
    <text>The disease is caused by variants affecting the gene represented in this entry.</text>
</comment>
<comment type="disease" evidence="12 36">
    <disease id="DI-00845">
        <name>Deafness, autosomal dominant, 17</name>
        <acronym>DFNA17</acronym>
        <description>A form of deafness characterized by progressive high frequency hearing impairment and cochleosaccular degeneration.</description>
        <dbReference type="MIM" id="603622"/>
    </disease>
    <text>The disease is caused by variants affecting the gene represented in this entry.</text>
</comment>
<comment type="disease">
    <text>Subjects with mutations in the motor domain of MYH9 present with severe thrombocytopenia and develop nephritis and deafness before the age of 40 years, while those with mutations in the tail domain have a much lower risk of noncongenital complications and significantly higher platelet counts. The clinical course of patients with mutations in the four most frequently affected residues of MYH9 (responsible for 70% of MYH9-related cases) were evaluated. Mutations at residue 1933 do not induce kidney damage or cataracts and cause deafness only in the elderly, those in position 702 result in severe thrombocytopenia and produce nephritis and deafness at a juvenile age, while alterations at residue 1424 or 1841 result in intermediate clinical pictures.</text>
</comment>
<comment type="disease">
    <text>Genetic variations in MYH9 are associated with non-diabetic end stage renal disease (ESRD).</text>
</comment>
<comment type="similarity">
    <text evidence="41">Belongs to the TRAFAC class myosin-kinesin ATPase superfamily. Myosin family.</text>
</comment>
<comment type="sequence caution" evidence="41">
    <conflict type="frameshift">
        <sequence resource="EMBL-CDS" id="CAD89954"/>
    </conflict>
</comment>
<comment type="online information" name="Atlas of Genetics and Cytogenetics in Oncology and Haematology">
    <link uri="https://atlasgeneticsoncology.org/gene/481/MYH9"/>
</comment>
<reference key="1">
    <citation type="journal article" date="2004" name="Genome Biol.">
        <title>A genome annotation-driven approach to cloning the human ORFeome.</title>
        <authorList>
            <person name="Collins J.E."/>
            <person name="Wright C.L."/>
            <person name="Edwards C.A."/>
            <person name="Davis M.P."/>
            <person name="Grinham J.A."/>
            <person name="Cole C.G."/>
            <person name="Goward M.E."/>
            <person name="Aguado B."/>
            <person name="Mallya M."/>
            <person name="Mokrab Y."/>
            <person name="Huckle E.J."/>
            <person name="Beare D.M."/>
            <person name="Dunham I."/>
        </authorList>
    </citation>
    <scope>NUCLEOTIDE SEQUENCE [LARGE SCALE MRNA] (ISOFORM 1)</scope>
</reference>
<reference key="2">
    <citation type="journal article" date="2005" name="DNA Res.">
        <title>Vector-capping: a simple method for preparing a high-quality full-length cDNA library.</title>
        <authorList>
            <person name="Kato S."/>
            <person name="Ohtoko K."/>
            <person name="Ohtake H."/>
            <person name="Kimura T."/>
        </authorList>
    </citation>
    <scope>NUCLEOTIDE SEQUENCE [LARGE SCALE MRNA]</scope>
</reference>
<reference key="3">
    <citation type="journal article" date="2007" name="BMC Genomics">
        <title>The full-ORF clone resource of the German cDNA consortium.</title>
        <authorList>
            <person name="Bechtel S."/>
            <person name="Rosenfelder H."/>
            <person name="Duda A."/>
            <person name="Schmidt C.P."/>
            <person name="Ernst U."/>
            <person name="Wellenreuther R."/>
            <person name="Mehrle A."/>
            <person name="Schuster C."/>
            <person name="Bahr A."/>
            <person name="Bloecker H."/>
            <person name="Heubner D."/>
            <person name="Hoerlein A."/>
            <person name="Michel G."/>
            <person name="Wedler H."/>
            <person name="Koehrer K."/>
            <person name="Ottenwaelder B."/>
            <person name="Poustka A."/>
            <person name="Wiemann S."/>
            <person name="Schupp I."/>
        </authorList>
    </citation>
    <scope>NUCLEOTIDE SEQUENCE [LARGE SCALE MRNA] (ISOFORM 2)</scope>
    <source>
        <tissue>Spinal cord</tissue>
    </source>
</reference>
<reference key="4">
    <citation type="submission" date="2007-01" db="EMBL/GenBank/DDBJ databases">
        <title>Multiplex amplification and cloning of 5'-ends of cDNA by ligase-free recombination: Preparation of full-lemgth cDNA clones encoding motor proteins.</title>
        <authorList>
            <person name="Yamakawa H."/>
            <person name="Kikuno R.F."/>
            <person name="Nagase T."/>
            <person name="Ohara O."/>
        </authorList>
    </citation>
    <scope>NUCLEOTIDE SEQUENCE [LARGE SCALE MRNA]</scope>
</reference>
<reference key="5">
    <citation type="journal article" date="1999" name="Nature">
        <title>The DNA sequence of human chromosome 22.</title>
        <authorList>
            <person name="Dunham I."/>
            <person name="Hunt A.R."/>
            <person name="Collins J.E."/>
            <person name="Bruskiewich R."/>
            <person name="Beare D.M."/>
            <person name="Clamp M."/>
            <person name="Smink L.J."/>
            <person name="Ainscough R."/>
            <person name="Almeida J.P."/>
            <person name="Babbage A.K."/>
            <person name="Bagguley C."/>
            <person name="Bailey J."/>
            <person name="Barlow K.F."/>
            <person name="Bates K.N."/>
            <person name="Beasley O.P."/>
            <person name="Bird C.P."/>
            <person name="Blakey S.E."/>
            <person name="Bridgeman A.M."/>
            <person name="Buck D."/>
            <person name="Burgess J."/>
            <person name="Burrill W.D."/>
            <person name="Burton J."/>
            <person name="Carder C."/>
            <person name="Carter N.P."/>
            <person name="Chen Y."/>
            <person name="Clark G."/>
            <person name="Clegg S.M."/>
            <person name="Cobley V.E."/>
            <person name="Cole C.G."/>
            <person name="Collier R.E."/>
            <person name="Connor R."/>
            <person name="Conroy D."/>
            <person name="Corby N.R."/>
            <person name="Coville G.J."/>
            <person name="Cox A.V."/>
            <person name="Davis J."/>
            <person name="Dawson E."/>
            <person name="Dhami P.D."/>
            <person name="Dockree C."/>
            <person name="Dodsworth S.J."/>
            <person name="Durbin R.M."/>
            <person name="Ellington A.G."/>
            <person name="Evans K.L."/>
            <person name="Fey J.M."/>
            <person name="Fleming K."/>
            <person name="French L."/>
            <person name="Garner A.A."/>
            <person name="Gilbert J.G.R."/>
            <person name="Goward M.E."/>
            <person name="Grafham D.V."/>
            <person name="Griffiths M.N.D."/>
            <person name="Hall C."/>
            <person name="Hall R.E."/>
            <person name="Hall-Tamlyn G."/>
            <person name="Heathcott R.W."/>
            <person name="Ho S."/>
            <person name="Holmes S."/>
            <person name="Hunt S.E."/>
            <person name="Jones M.C."/>
            <person name="Kershaw J."/>
            <person name="Kimberley A.M."/>
            <person name="King A."/>
            <person name="Laird G.K."/>
            <person name="Langford C.F."/>
            <person name="Leversha M.A."/>
            <person name="Lloyd C."/>
            <person name="Lloyd D.M."/>
            <person name="Martyn I.D."/>
            <person name="Mashreghi-Mohammadi M."/>
            <person name="Matthews L.H."/>
            <person name="Mccann O.T."/>
            <person name="Mcclay J."/>
            <person name="Mclaren S."/>
            <person name="McMurray A.A."/>
            <person name="Milne S.A."/>
            <person name="Mortimore B.J."/>
            <person name="Odell C.N."/>
            <person name="Pavitt R."/>
            <person name="Pearce A.V."/>
            <person name="Pearson D."/>
            <person name="Phillimore B.J.C.T."/>
            <person name="Phillips S.H."/>
            <person name="Plumb R.W."/>
            <person name="Ramsay H."/>
            <person name="Ramsey Y."/>
            <person name="Rogers L."/>
            <person name="Ross M.T."/>
            <person name="Scott C.E."/>
            <person name="Sehra H.K."/>
            <person name="Skuce C.D."/>
            <person name="Smalley S."/>
            <person name="Smith M.L."/>
            <person name="Soderlund C."/>
            <person name="Spragon L."/>
            <person name="Steward C.A."/>
            <person name="Sulston J.E."/>
            <person name="Swann R.M."/>
            <person name="Vaudin M."/>
            <person name="Wall M."/>
            <person name="Wallis J.M."/>
            <person name="Whiteley M.N."/>
            <person name="Willey D.L."/>
            <person name="Williams L."/>
            <person name="Williams S.A."/>
            <person name="Williamson H."/>
            <person name="Wilmer T.E."/>
            <person name="Wilming L."/>
            <person name="Wright C.L."/>
            <person name="Hubbard T."/>
            <person name="Bentley D.R."/>
            <person name="Beck S."/>
            <person name="Rogers J."/>
            <person name="Shimizu N."/>
            <person name="Minoshima S."/>
            <person name="Kawasaki K."/>
            <person name="Sasaki T."/>
            <person name="Asakawa S."/>
            <person name="Kudoh J."/>
            <person name="Shintani A."/>
            <person name="Shibuya K."/>
            <person name="Yoshizaki Y."/>
            <person name="Aoki N."/>
            <person name="Mitsuyama S."/>
            <person name="Roe B.A."/>
            <person name="Chen F."/>
            <person name="Chu L."/>
            <person name="Crabtree J."/>
            <person name="Deschamps S."/>
            <person name="Do A."/>
            <person name="Do T."/>
            <person name="Dorman A."/>
            <person name="Fang F."/>
            <person name="Fu Y."/>
            <person name="Hu P."/>
            <person name="Hua A."/>
            <person name="Kenton S."/>
            <person name="Lai H."/>
            <person name="Lao H.I."/>
            <person name="Lewis J."/>
            <person name="Lewis S."/>
            <person name="Lin S.-P."/>
            <person name="Loh P."/>
            <person name="Malaj E."/>
            <person name="Nguyen T."/>
            <person name="Pan H."/>
            <person name="Phan S."/>
            <person name="Qi S."/>
            <person name="Qian Y."/>
            <person name="Ray L."/>
            <person name="Ren Q."/>
            <person name="Shaull S."/>
            <person name="Sloan D."/>
            <person name="Song L."/>
            <person name="Wang Q."/>
            <person name="Wang Y."/>
            <person name="Wang Z."/>
            <person name="White J."/>
            <person name="Willingham D."/>
            <person name="Wu H."/>
            <person name="Yao Z."/>
            <person name="Zhan M."/>
            <person name="Zhang G."/>
            <person name="Chissoe S."/>
            <person name="Murray J."/>
            <person name="Miller N."/>
            <person name="Minx P."/>
            <person name="Fulton R."/>
            <person name="Johnson D."/>
            <person name="Bemis G."/>
            <person name="Bentley D."/>
            <person name="Bradshaw H."/>
            <person name="Bourne S."/>
            <person name="Cordes M."/>
            <person name="Du Z."/>
            <person name="Fulton L."/>
            <person name="Goela D."/>
            <person name="Graves T."/>
            <person name="Hawkins J."/>
            <person name="Hinds K."/>
            <person name="Kemp K."/>
            <person name="Latreille P."/>
            <person name="Layman D."/>
            <person name="Ozersky P."/>
            <person name="Rohlfing T."/>
            <person name="Scheet P."/>
            <person name="Walker C."/>
            <person name="Wamsley A."/>
            <person name="Wohldmann P."/>
            <person name="Pepin K."/>
            <person name="Nelson J."/>
            <person name="Korf I."/>
            <person name="Bedell J.A."/>
            <person name="Hillier L.W."/>
            <person name="Mardis E."/>
            <person name="Waterston R."/>
            <person name="Wilson R."/>
            <person name="Emanuel B.S."/>
            <person name="Shaikh T."/>
            <person name="Kurahashi H."/>
            <person name="Saitta S."/>
            <person name="Budarf M.L."/>
            <person name="McDermid H.E."/>
            <person name="Johnson A."/>
            <person name="Wong A.C.C."/>
            <person name="Morrow B.E."/>
            <person name="Edelmann L."/>
            <person name="Kim U.J."/>
            <person name="Shizuya H."/>
            <person name="Simon M.I."/>
            <person name="Dumanski J.P."/>
            <person name="Peyrard M."/>
            <person name="Kedra D."/>
            <person name="Seroussi E."/>
            <person name="Fransson I."/>
            <person name="Tapia I."/>
            <person name="Bruder C.E."/>
            <person name="O'Brien K.P."/>
            <person name="Wilkinson P."/>
            <person name="Bodenteich A."/>
            <person name="Hartman K."/>
            <person name="Hu X."/>
            <person name="Khan A.S."/>
            <person name="Lane L."/>
            <person name="Tilahun Y."/>
            <person name="Wright H."/>
        </authorList>
    </citation>
    <scope>NUCLEOTIDE SEQUENCE [LARGE SCALE GENOMIC DNA]</scope>
</reference>
<reference key="6">
    <citation type="submission" date="2005-07" db="EMBL/GenBank/DDBJ databases">
        <authorList>
            <person name="Mural R.J."/>
            <person name="Istrail S."/>
            <person name="Sutton G."/>
            <person name="Florea L."/>
            <person name="Halpern A.L."/>
            <person name="Mobarry C.M."/>
            <person name="Lippert R."/>
            <person name="Walenz B."/>
            <person name="Shatkay H."/>
            <person name="Dew I."/>
            <person name="Miller J.R."/>
            <person name="Flanigan M.J."/>
            <person name="Edwards N.J."/>
            <person name="Bolanos R."/>
            <person name="Fasulo D."/>
            <person name="Halldorsson B.V."/>
            <person name="Hannenhalli S."/>
            <person name="Turner R."/>
            <person name="Yooseph S."/>
            <person name="Lu F."/>
            <person name="Nusskern D.R."/>
            <person name="Shue B.C."/>
            <person name="Zheng X.H."/>
            <person name="Zhong F."/>
            <person name="Delcher A.L."/>
            <person name="Huson D.H."/>
            <person name="Kravitz S.A."/>
            <person name="Mouchard L."/>
            <person name="Reinert K."/>
            <person name="Remington K.A."/>
            <person name="Clark A.G."/>
            <person name="Waterman M.S."/>
            <person name="Eichler E.E."/>
            <person name="Adams M.D."/>
            <person name="Hunkapiller M.W."/>
            <person name="Myers E.W."/>
            <person name="Venter J.C."/>
        </authorList>
    </citation>
    <scope>NUCLEOTIDE SEQUENCE [LARGE SCALE GENOMIC DNA]</scope>
</reference>
<reference key="7">
    <citation type="journal article" date="1991" name="Blood">
        <title>Cellular myosin heavy chain in human leukocytes: isolation of 5' cDNA clones, characterization of the protein, chromosomal localization, and upregulation during myeloid differentiation.</title>
        <authorList>
            <person name="Toothaker L.E."/>
            <person name="Gonzalez D.A."/>
            <person name="Tung N."/>
            <person name="Lemons R.S."/>
            <person name="le Beau M.M."/>
            <person name="Arnaout M.A."/>
            <person name="Clayton L.K."/>
            <person name="Tenen D.G."/>
        </authorList>
    </citation>
    <scope>NUCLEOTIDE SEQUENCE [MRNA] OF 1-1337</scope>
    <scope>TISSUE SPECIFICITY</scope>
</reference>
<reference key="8">
    <citation type="journal article" date="2004" name="Nat. Genet.">
        <title>Complete sequencing and characterization of 21,243 full-length human cDNAs.</title>
        <authorList>
            <person name="Ota T."/>
            <person name="Suzuki Y."/>
            <person name="Nishikawa T."/>
            <person name="Otsuki T."/>
            <person name="Sugiyama T."/>
            <person name="Irie R."/>
            <person name="Wakamatsu A."/>
            <person name="Hayashi K."/>
            <person name="Sato H."/>
            <person name="Nagai K."/>
            <person name="Kimura K."/>
            <person name="Makita H."/>
            <person name="Sekine M."/>
            <person name="Obayashi M."/>
            <person name="Nishi T."/>
            <person name="Shibahara T."/>
            <person name="Tanaka T."/>
            <person name="Ishii S."/>
            <person name="Yamamoto J."/>
            <person name="Saito K."/>
            <person name="Kawai Y."/>
            <person name="Isono Y."/>
            <person name="Nakamura Y."/>
            <person name="Nagahari K."/>
            <person name="Murakami K."/>
            <person name="Yasuda T."/>
            <person name="Iwayanagi T."/>
            <person name="Wagatsuma M."/>
            <person name="Shiratori A."/>
            <person name="Sudo H."/>
            <person name="Hosoiri T."/>
            <person name="Kaku Y."/>
            <person name="Kodaira H."/>
            <person name="Kondo H."/>
            <person name="Sugawara M."/>
            <person name="Takahashi M."/>
            <person name="Kanda K."/>
            <person name="Yokoi T."/>
            <person name="Furuya T."/>
            <person name="Kikkawa E."/>
            <person name="Omura Y."/>
            <person name="Abe K."/>
            <person name="Kamihara K."/>
            <person name="Katsuta N."/>
            <person name="Sato K."/>
            <person name="Tanikawa M."/>
            <person name="Yamazaki M."/>
            <person name="Ninomiya K."/>
            <person name="Ishibashi T."/>
            <person name="Yamashita H."/>
            <person name="Murakawa K."/>
            <person name="Fujimori K."/>
            <person name="Tanai H."/>
            <person name="Kimata M."/>
            <person name="Watanabe M."/>
            <person name="Hiraoka S."/>
            <person name="Chiba Y."/>
            <person name="Ishida S."/>
            <person name="Ono Y."/>
            <person name="Takiguchi S."/>
            <person name="Watanabe S."/>
            <person name="Yosida M."/>
            <person name="Hotuta T."/>
            <person name="Kusano J."/>
            <person name="Kanehori K."/>
            <person name="Takahashi-Fujii A."/>
            <person name="Hara H."/>
            <person name="Tanase T.-O."/>
            <person name="Nomura Y."/>
            <person name="Togiya S."/>
            <person name="Komai F."/>
            <person name="Hara R."/>
            <person name="Takeuchi K."/>
            <person name="Arita M."/>
            <person name="Imose N."/>
            <person name="Musashino K."/>
            <person name="Yuuki H."/>
            <person name="Oshima A."/>
            <person name="Sasaki N."/>
            <person name="Aotsuka S."/>
            <person name="Yoshikawa Y."/>
            <person name="Matsunawa H."/>
            <person name="Ichihara T."/>
            <person name="Shiohata N."/>
            <person name="Sano S."/>
            <person name="Moriya S."/>
            <person name="Momiyama H."/>
            <person name="Satoh N."/>
            <person name="Takami S."/>
            <person name="Terashima Y."/>
            <person name="Suzuki O."/>
            <person name="Nakagawa S."/>
            <person name="Senoh A."/>
            <person name="Mizoguchi H."/>
            <person name="Goto Y."/>
            <person name="Shimizu F."/>
            <person name="Wakebe H."/>
            <person name="Hishigaki H."/>
            <person name="Watanabe T."/>
            <person name="Sugiyama A."/>
            <person name="Takemoto M."/>
            <person name="Kawakami B."/>
            <person name="Yamazaki M."/>
            <person name="Watanabe K."/>
            <person name="Kumagai A."/>
            <person name="Itakura S."/>
            <person name="Fukuzumi Y."/>
            <person name="Fujimori Y."/>
            <person name="Komiyama M."/>
            <person name="Tashiro H."/>
            <person name="Tanigami A."/>
            <person name="Fujiwara T."/>
            <person name="Ono T."/>
            <person name="Yamada K."/>
            <person name="Fujii Y."/>
            <person name="Ozaki K."/>
            <person name="Hirao M."/>
            <person name="Ohmori Y."/>
            <person name="Kawabata A."/>
            <person name="Hikiji T."/>
            <person name="Kobatake N."/>
            <person name="Inagaki H."/>
            <person name="Ikema Y."/>
            <person name="Okamoto S."/>
            <person name="Okitani R."/>
            <person name="Kawakami T."/>
            <person name="Noguchi S."/>
            <person name="Itoh T."/>
            <person name="Shigeta K."/>
            <person name="Senba T."/>
            <person name="Matsumura K."/>
            <person name="Nakajima Y."/>
            <person name="Mizuno T."/>
            <person name="Morinaga M."/>
            <person name="Sasaki M."/>
            <person name="Togashi T."/>
            <person name="Oyama M."/>
            <person name="Hata H."/>
            <person name="Watanabe M."/>
            <person name="Komatsu T."/>
            <person name="Mizushima-Sugano J."/>
            <person name="Satoh T."/>
            <person name="Shirai Y."/>
            <person name="Takahashi Y."/>
            <person name="Nakagawa K."/>
            <person name="Okumura K."/>
            <person name="Nagase T."/>
            <person name="Nomura N."/>
            <person name="Kikuchi H."/>
            <person name="Masuho Y."/>
            <person name="Yamashita R."/>
            <person name="Nakai K."/>
            <person name="Yada T."/>
            <person name="Nakamura Y."/>
            <person name="Ohara O."/>
            <person name="Isogai T."/>
            <person name="Sugano S."/>
        </authorList>
    </citation>
    <scope>NUCLEOTIDE SEQUENCE [LARGE SCALE MRNA] OF 1-1009</scope>
    <source>
        <tissue>Placenta</tissue>
    </source>
</reference>
<reference key="9">
    <citation type="journal article" date="1991" name="Circ. Res.">
        <title>Human nonmuscle myosin heavy chains are encoded by two genes located on different chromosomes.</title>
        <authorList>
            <person name="Simons M."/>
            <person name="Wang M."/>
            <person name="McBride O.W."/>
            <person name="Kawamoto S."/>
            <person name="Yamakawa K."/>
            <person name="Gdula D."/>
            <person name="Adelstein R.S."/>
            <person name="Weir L."/>
        </authorList>
    </citation>
    <scope>NUCLEOTIDE SEQUENCE [MRNA] OF 1-715</scope>
</reference>
<reference key="10">
    <citation type="submission" date="2005-08" db="UniProtKB">
        <authorList>
            <person name="Bienvenut W.V."/>
            <person name="Claeys R."/>
        </authorList>
    </citation>
    <scope>PROTEIN SEQUENCE OF 2-47; 67-74; 126-139; 187-199; 203-225; 241-261; 290-299; 328-355; 359-387; 408-419; 476-494; 546-555; 581-613; 618-637; 645-651; 657-670; 683-693; 712-718; 721-731; 746-755; 765-775; 802-810; 824-829; 834-842; 861-867; 924-930; 995-1014; 1042-1048; 1052-1075; 1081-1099; 1136-1162; 1166-1191; 1261-1266; 1278-1295; 1302-1322; 1393-1400; 1405-1413; 1418-1433; 1484-1492; 1504-1513; 1519-1525; 1529-1555; 1558-1566; 1606-1612; 1614-1638; 1642-1648; 1662-1669; 1704-1724; 1794-1802; 1807-1828; 1857-1867; 1899-1912; 1923-1932 AND 1951-1960</scope>
    <scope>CLEAVAGE OF INITIATOR METHIONINE</scope>
    <scope>ACETYLATION AT ALA-2</scope>
    <scope>IDENTIFICATION BY MASS SPECTROMETRY</scope>
    <source>
        <tissue>Platelet</tissue>
    </source>
</reference>
<reference key="11">
    <citation type="journal article" date="1990" name="Proc. Natl. Acad. Sci. U.S.A.">
        <title>Human nonmuscle myosin heavy chain mRNA: generation of diversity through alternative polyadenylylation.</title>
        <authorList>
            <person name="Saez C.G."/>
            <person name="Myers J.C."/>
            <person name="Shows T.B."/>
            <person name="Leinwand L.A."/>
        </authorList>
    </citation>
    <scope>NUCLEOTIDE SEQUENCE [MRNA] OF 714-1960</scope>
</reference>
<reference key="12">
    <citation type="journal article" date="2003" name="J. Biol. Chem.">
        <title>F-actin and myosin II binding domains in supervillin.</title>
        <authorList>
            <person name="Chen Y."/>
            <person name="Takizawa N."/>
            <person name="Crowley J.L."/>
            <person name="Oh S.W."/>
            <person name="Gatto C.L."/>
            <person name="Kambara T."/>
            <person name="Sato O."/>
            <person name="Li X.-D."/>
            <person name="Ikebe M."/>
            <person name="Luna E.J."/>
        </authorList>
    </citation>
    <scope>INTERACTION WITH SVIL</scope>
</reference>
<reference key="13">
    <citation type="journal article" date="2003" name="Nature">
        <title>Proteomic characterization of the human centrosome by protein correlation profiling.</title>
        <authorList>
            <person name="Andersen J.S."/>
            <person name="Wilkinson C.J."/>
            <person name="Mayor T."/>
            <person name="Mortensen P."/>
            <person name="Nigg E.A."/>
            <person name="Mann M."/>
        </authorList>
    </citation>
    <scope>IDENTIFICATION BY MASS SPECTROMETRY</scope>
    <source>
        <tissue>Lymphoblast</tissue>
    </source>
</reference>
<reference key="14">
    <citation type="journal article" date="2005" name="Biochem. Biophys. Res. Commun.">
        <title>Proteomic identification of proteins conjugated to ISG15 in mouse and human cells.</title>
        <authorList>
            <person name="Giannakopoulos N.V."/>
            <person name="Luo J.K."/>
            <person name="Papov V."/>
            <person name="Zou W."/>
            <person name="Lenschow D.J."/>
            <person name="Jacobs B.S."/>
            <person name="Borden E.C."/>
            <person name="Li J."/>
            <person name="Virgin H.W."/>
            <person name="Zhang D.E."/>
        </authorList>
    </citation>
    <scope>ISGYLATION</scope>
</reference>
<reference key="15">
    <citation type="journal article" date="2006" name="Cell">
        <title>Global, in vivo, and site-specific phosphorylation dynamics in signaling networks.</title>
        <authorList>
            <person name="Olsen J.V."/>
            <person name="Blagoev B."/>
            <person name="Gnad F."/>
            <person name="Macek B."/>
            <person name="Kumar C."/>
            <person name="Mortensen P."/>
            <person name="Mann M."/>
        </authorList>
    </citation>
    <scope>PHOSPHORYLATION [LARGE SCALE ANALYSIS] AT SER-1943</scope>
    <scope>IDENTIFICATION BY MASS SPECTROMETRY [LARGE SCALE ANALYSIS]</scope>
    <source>
        <tissue>Cervix carcinoma</tissue>
    </source>
</reference>
<reference key="16">
    <citation type="journal article" date="2006" name="Nat. Biotechnol.">
        <title>A probability-based approach for high-throughput protein phosphorylation analysis and site localization.</title>
        <authorList>
            <person name="Beausoleil S.A."/>
            <person name="Villen J."/>
            <person name="Gerber S.A."/>
            <person name="Rush J."/>
            <person name="Gygi S.P."/>
        </authorList>
    </citation>
    <scope>PHOSPHORYLATION [LARGE SCALE ANALYSIS] AT SER-1943</scope>
    <scope>IDENTIFICATION BY MASS SPECTROMETRY [LARGE SCALE ANALYSIS]</scope>
    <source>
        <tissue>Cervix carcinoma</tissue>
    </source>
</reference>
<reference key="17">
    <citation type="journal article" date="2006" name="Cancer Res.">
        <title>The S100A4 metastasis factor regulates cellular motility via a direct interaction with myosin-IIA.</title>
        <authorList>
            <person name="Li Z.H."/>
            <person name="Bresnick A.R."/>
        </authorList>
    </citation>
    <scope>INTERACTION WITH S100A4</scope>
    <scope>FUNCTION</scope>
</reference>
<reference key="18">
    <citation type="journal article" date="2007" name="Electrophoresis">
        <title>Toward a global characterization of the phosphoproteome in prostate cancer cells: identification of phosphoproteins in the LNCaP cell line.</title>
        <authorList>
            <person name="Giorgianni F."/>
            <person name="Zhao Y."/>
            <person name="Desiderio D.M."/>
            <person name="Beranova-Giorgianni S."/>
        </authorList>
    </citation>
    <scope>PHOSPHORYLATION [LARGE SCALE ANALYSIS] AT SER-1943</scope>
    <scope>IDENTIFICATION BY MASS SPECTROMETRY [LARGE SCALE ANALYSIS]</scope>
    <source>
        <tissue>Prostate cancer</tissue>
    </source>
</reference>
<reference key="19">
    <citation type="journal article" date="2007" name="J. Cell Sci.">
        <title>Supervillin slows cell spreading by facilitating myosin II activation at the cell periphery.</title>
        <authorList>
            <person name="Takizawa N."/>
            <person name="Ikebe R."/>
            <person name="Ikebe M."/>
            <person name="Luna E.J."/>
        </authorList>
    </citation>
    <scope>INTERACTION WITH SVIL</scope>
</reference>
<reference key="20">
    <citation type="journal article" date="2008" name="J. Proteome Res.">
        <title>Phosphorylation analysis of primary human T lymphocytes using sequential IMAC and titanium oxide enrichment.</title>
        <authorList>
            <person name="Carrascal M."/>
            <person name="Ovelleiro D."/>
            <person name="Casas V."/>
            <person name="Gay M."/>
            <person name="Abian J."/>
        </authorList>
    </citation>
    <scope>PHOSPHORYLATION [LARGE SCALE ANALYSIS] AT SER-1943</scope>
    <scope>IDENTIFICATION BY MASS SPECTROMETRY [LARGE SCALE ANALYSIS]</scope>
    <source>
        <tissue>T-cell</tissue>
    </source>
</reference>
<reference key="21">
    <citation type="journal article" date="2008" name="J. Proteome Res.">
        <title>Phosphoproteome of resting human platelets.</title>
        <authorList>
            <person name="Zahedi R.P."/>
            <person name="Lewandrowski U."/>
            <person name="Wiesner J."/>
            <person name="Wortelkamp S."/>
            <person name="Moebius J."/>
            <person name="Schuetz C."/>
            <person name="Walter U."/>
            <person name="Gambaryan S."/>
            <person name="Sickmann A."/>
        </authorList>
    </citation>
    <scope>PHOSPHORYLATION [LARGE SCALE ANALYSIS] AT SER-1943</scope>
    <scope>IDENTIFICATION BY MASS SPECTROMETRY [LARGE SCALE ANALYSIS]</scope>
    <source>
        <tissue>Platelet</tissue>
    </source>
</reference>
<reference key="22">
    <citation type="journal article" date="2008" name="Nat. Genet.">
        <title>MYH9 is a major-effect risk gene for focal segmental glomerulosclerosis.</title>
        <authorList>
            <person name="Kopp J.B."/>
            <person name="Smith M.W."/>
            <person name="Nelson G.W."/>
            <person name="Johnson R.C."/>
            <person name="Freedman B.I."/>
            <person name="Bowden D.W."/>
            <person name="Oleksyk T."/>
            <person name="McKenzie L.M."/>
            <person name="Kajiyama H."/>
            <person name="Ahuja T.S."/>
            <person name="Berns J.S."/>
            <person name="Briggs W."/>
            <person name="Cho M.E."/>
            <person name="Dart R.A."/>
            <person name="Kimmel P.L."/>
            <person name="Korbet S.M."/>
            <person name="Michel D.M."/>
            <person name="Mokrzycki M.H."/>
            <person name="Schelling J.R."/>
            <person name="Simon E."/>
            <person name="Trachtman H."/>
            <person name="Vlahov D."/>
            <person name="Winkler C.A."/>
        </authorList>
    </citation>
    <scope>ASSOCIATION WITH END STAGE RENAL DISEASE</scope>
</reference>
<reference key="23">
    <citation type="journal article" date="2008" name="Nat. Genet.">
        <title>MYH9 is associated with nondiabetic end-stage renal disease in African Americans.</title>
        <authorList>
            <person name="Kao W.H."/>
            <person name="Klag M.J."/>
            <person name="Meoni L.A."/>
            <person name="Reich D."/>
            <person name="Berthier-Schaad Y."/>
            <person name="Li M."/>
            <person name="Coresh J."/>
            <person name="Patterson N."/>
            <person name="Tandon A."/>
            <person name="Powe N.R."/>
            <person name="Fink N.E."/>
            <person name="Sadler J.H."/>
            <person name="Weir M.R."/>
            <person name="Abboud H.E."/>
            <person name="Adler S.G."/>
            <person name="Divers J."/>
            <person name="Iyengar S.K."/>
            <person name="Freedman B.I."/>
            <person name="Kimmel P.L."/>
            <person name="Knowler W.C."/>
            <person name="Kohn O.F."/>
            <person name="Kramp K."/>
            <person name="Leehey D.J."/>
            <person name="Nicholas S.B."/>
            <person name="Pahl M.V."/>
            <person name="Schelling J.R."/>
            <person name="Sedor J.R."/>
            <person name="Thornley-Brown D."/>
            <person name="Winkler C.A."/>
            <person name="Smith M.W."/>
            <person name="Parekh R.S."/>
        </authorList>
    </citation>
    <scope>ASSOCIATION WITH END STAGE RENAL DISEASE</scope>
</reference>
<reference key="24">
    <citation type="journal article" date="2008" name="Proc. Natl. Acad. Sci. U.S.A.">
        <title>A quantitative atlas of mitotic phosphorylation.</title>
        <authorList>
            <person name="Dephoure N."/>
            <person name="Zhou C."/>
            <person name="Villen J."/>
            <person name="Beausoleil S.A."/>
            <person name="Bakalarski C.E."/>
            <person name="Elledge S.J."/>
            <person name="Gygi S.P."/>
        </authorList>
    </citation>
    <scope>IDENTIFICATION BY MASS SPECTROMETRY [LARGE SCALE ANALYSIS]</scope>
    <source>
        <tissue>Cervix carcinoma</tissue>
    </source>
</reference>
<reference key="25">
    <citation type="journal article" date="2008" name="Proteomics">
        <title>Large-scale phosphoproteome analysis of human liver tissue by enrichment and fractionation of phosphopeptides with strong anion exchange chromatography.</title>
        <authorList>
            <person name="Han G."/>
            <person name="Ye M."/>
            <person name="Zhou H."/>
            <person name="Jiang X."/>
            <person name="Feng S."/>
            <person name="Jiang X."/>
            <person name="Tian R."/>
            <person name="Wan D."/>
            <person name="Zou H."/>
            <person name="Gu J."/>
        </authorList>
    </citation>
    <scope>PHOSPHORYLATION [LARGE SCALE ANALYSIS] AT SER-1943</scope>
    <scope>IDENTIFICATION BY MASS SPECTROMETRY [LARGE SCALE ANALYSIS]</scope>
    <source>
        <tissue>Liver</tissue>
    </source>
</reference>
<reference key="26">
    <citation type="journal article" date="2009" name="Anal. Chem.">
        <title>Lys-N and trypsin cover complementary parts of the phosphoproteome in a refined SCX-based approach.</title>
        <authorList>
            <person name="Gauci S."/>
            <person name="Helbig A.O."/>
            <person name="Slijper M."/>
            <person name="Krijgsveld J."/>
            <person name="Heck A.J."/>
            <person name="Mohammed S."/>
        </authorList>
    </citation>
    <scope>IDENTIFICATION BY MASS SPECTROMETRY [LARGE SCALE ANALYSIS]</scope>
</reference>
<reference key="27">
    <citation type="journal article" date="2009" name="Kidney Int.">
        <title>Polymorphisms in the non-muscle myosin heavy chain 9 gene (MYH9) are strongly associated with end-stage renal disease historically attributed to hypertension in African Americans.</title>
        <authorList>
            <person name="Freedman B.I."/>
            <person name="Hicks P.J."/>
            <person name="Bostrom M.A."/>
            <person name="Cunningham M.E."/>
            <person name="Liu Y."/>
            <person name="Divers J."/>
            <person name="Kopp J.B."/>
            <person name="Winkler C.A."/>
            <person name="Nelson G.W."/>
            <person name="Langefeld C.D."/>
            <person name="Bowden D.W."/>
        </authorList>
    </citation>
    <scope>ASSOCIATION WITH END STAGE RENAL DISEASE</scope>
</reference>
<reference key="28">
    <citation type="journal article" date="2009" name="Mol. Cell. Proteomics">
        <title>Large-scale proteomics analysis of the human kinome.</title>
        <authorList>
            <person name="Oppermann F.S."/>
            <person name="Gnad F."/>
            <person name="Olsen J.V."/>
            <person name="Hornberger R."/>
            <person name="Greff Z."/>
            <person name="Keri G."/>
            <person name="Mann M."/>
            <person name="Daub H."/>
        </authorList>
    </citation>
    <scope>PHOSPHORYLATION [LARGE SCALE ANALYSIS] AT SER-1943</scope>
    <scope>IDENTIFICATION BY MASS SPECTROMETRY [LARGE SCALE ANALYSIS]</scope>
</reference>
<reference key="29">
    <citation type="journal article" date="2009" name="Sci. Signal.">
        <title>Quantitative phosphoproteomic analysis of T cell receptor signaling reveals system-wide modulation of protein-protein interactions.</title>
        <authorList>
            <person name="Mayya V."/>
            <person name="Lundgren D.H."/>
            <person name="Hwang S.-I."/>
            <person name="Rezaul K."/>
            <person name="Wu L."/>
            <person name="Eng J.K."/>
            <person name="Rodionov V."/>
            <person name="Han D.K."/>
        </authorList>
    </citation>
    <scope>PHOSPHORYLATION [LARGE SCALE ANALYSIS] AT TYR-11 AND SER-1943</scope>
    <scope>IDENTIFICATION BY MASS SPECTROMETRY [LARGE SCALE ANALYSIS]</scope>
    <source>
        <tissue>Leukemic T-cell</tissue>
    </source>
</reference>
<reference key="30">
    <citation type="journal article" date="2009" name="Science">
        <title>Lysine acetylation targets protein complexes and co-regulates major cellular functions.</title>
        <authorList>
            <person name="Choudhary C."/>
            <person name="Kumar C."/>
            <person name="Gnad F."/>
            <person name="Nielsen M.L."/>
            <person name="Rehman M."/>
            <person name="Walther T.C."/>
            <person name="Olsen J.V."/>
            <person name="Mann M."/>
        </authorList>
    </citation>
    <scope>ACETYLATION [LARGE SCALE ANALYSIS] AT LYS-8; LYS-102; LYS-299; LYS-1024; LYS-1357; LYS-1392; LYS-1404; LYS-1410; LYS-1459 AND LYS-1638</scope>
    <scope>IDENTIFICATION BY MASS SPECTROMETRY [LARGE SCALE ANALYSIS]</scope>
</reference>
<reference key="31">
    <citation type="journal article" date="2010" name="Nature">
        <title>Non-muscle myosin IIA is a functional entry receptor for herpes simplex virus-1.</title>
        <authorList>
            <person name="Arii J."/>
            <person name="Goto H."/>
            <person name="Suenaga T."/>
            <person name="Oyama M."/>
            <person name="Kozuka-Hata H."/>
            <person name="Imai T."/>
            <person name="Minowa A."/>
            <person name="Akashi H."/>
            <person name="Arase H."/>
            <person name="Kawaoka Y."/>
            <person name="Kawaguchi Y."/>
        </authorList>
    </citation>
    <scope>FUNCTION (MICROBIAL INFECTION)</scope>
    <scope>INTERACTION WITH HERPES SIMPLEX VIRUS GLYCOPROTEIN B</scope>
    <scope>SUBCELLULAR LOCATION (MICROBIAL INFECTION)</scope>
</reference>
<reference key="32">
    <citation type="journal article" date="2010" name="PLoS ONE">
        <title>Myosin II motor proteins with different functions determine the fate of lamellipodia extension during cell spreading.</title>
        <authorList>
            <person name="Betapudi V."/>
        </authorList>
    </citation>
    <scope>FUNCTION</scope>
    <scope>SUBCELLULAR LOCATION</scope>
</reference>
<reference key="33">
    <citation type="journal article" date="2010" name="Sci. Signal.">
        <title>Quantitative phosphoproteomics reveals widespread full phosphorylation site occupancy during mitosis.</title>
        <authorList>
            <person name="Olsen J.V."/>
            <person name="Vermeulen M."/>
            <person name="Santamaria A."/>
            <person name="Kumar C."/>
            <person name="Miller M.L."/>
            <person name="Jensen L.J."/>
            <person name="Gnad F."/>
            <person name="Cox J."/>
            <person name="Jensen T.S."/>
            <person name="Nigg E.A."/>
            <person name="Brunak S."/>
            <person name="Mann M."/>
        </authorList>
    </citation>
    <scope>PHOSPHORYLATION [LARGE SCALE ANALYSIS] AT SER-1714 AND SER-1943</scope>
    <scope>IDENTIFICATION BY MASS SPECTROMETRY [LARGE SCALE ANALYSIS]</scope>
    <source>
        <tissue>Cervix carcinoma</tissue>
    </source>
</reference>
<reference key="34">
    <citation type="journal article" date="2011" name="BMC Syst. Biol.">
        <title>Initial characterization of the human central proteome.</title>
        <authorList>
            <person name="Burkard T.R."/>
            <person name="Planyavsky M."/>
            <person name="Kaupe I."/>
            <person name="Breitwieser F.P."/>
            <person name="Buerckstuemmer T."/>
            <person name="Bennett K.L."/>
            <person name="Superti-Furga G."/>
            <person name="Colinge J."/>
        </authorList>
    </citation>
    <scope>IDENTIFICATION BY MASS SPECTROMETRY [LARGE SCALE ANALYSIS]</scope>
</reference>
<reference key="35">
    <citation type="journal article" date="2011" name="Sci. Signal.">
        <title>System-wide temporal characterization of the proteome and phosphoproteome of human embryonic stem cell differentiation.</title>
        <authorList>
            <person name="Rigbolt K.T."/>
            <person name="Prokhorova T.A."/>
            <person name="Akimov V."/>
            <person name="Henningsen J."/>
            <person name="Johansen P.T."/>
            <person name="Kratchmarova I."/>
            <person name="Kassem M."/>
            <person name="Mann M."/>
            <person name="Olsen J.V."/>
            <person name="Blagoev B."/>
        </authorList>
    </citation>
    <scope>PHOSPHORYLATION [LARGE SCALE ANALYSIS] AT SER-1943</scope>
    <scope>IDENTIFICATION BY MASS SPECTROMETRY [LARGE SCALE ANALYSIS]</scope>
</reference>
<reference key="36">
    <citation type="journal article" date="2012" name="BioTechniques">
        <title>Application of the wheat-germ cell-free translation system to produce high temperature requirement A3 (HtrA3) proteases.</title>
        <authorList>
            <person name="Singh H."/>
            <person name="Makino S."/>
            <person name="Endo Y."/>
            <person name="Li Y."/>
            <person name="Stephens A.N."/>
            <person name="Nie G."/>
        </authorList>
    </citation>
    <scope>INTERACTION WITH HTRA3</scope>
</reference>
<reference key="37">
    <citation type="journal article" date="2012" name="PLoS ONE">
        <title>Sequence-specific binding of recombinant Zbed4 to DNA: insights into Zbed4 participation in gene transcription and its association with other proteins.</title>
        <authorList>
            <person name="Mokhonov V.V."/>
            <person name="Theendakara V.P."/>
            <person name="Gribanova Y.E."/>
            <person name="Ahmedli N.B."/>
            <person name="Farber D.B."/>
        </authorList>
    </citation>
    <scope>INTERACTION WITH ZBED4</scope>
    <scope>SUBCELLULAR LOCATION</scope>
</reference>
<reference key="38">
    <citation type="journal article" date="2012" name="Proc. Natl. Acad. Sci. U.S.A.">
        <title>N-terminal acetylome analyses and functional insights of the N-terminal acetyltransferase NatB.</title>
        <authorList>
            <person name="Van Damme P."/>
            <person name="Lasa M."/>
            <person name="Polevoda B."/>
            <person name="Gazquez C."/>
            <person name="Elosegui-Artola A."/>
            <person name="Kim D.S."/>
            <person name="De Juan-Pardo E."/>
            <person name="Demeyer K."/>
            <person name="Hole K."/>
            <person name="Larrea E."/>
            <person name="Timmerman E."/>
            <person name="Prieto J."/>
            <person name="Arnesen T."/>
            <person name="Sherman F."/>
            <person name="Gevaert K."/>
            <person name="Aldabe R."/>
        </authorList>
    </citation>
    <scope>IDENTIFICATION BY MASS SPECTROMETRY [LARGE SCALE ANALYSIS]</scope>
</reference>
<reference key="39">
    <citation type="journal article" date="2013" name="J. Proteome Res.">
        <title>Toward a comprehensive characterization of a human cancer cell phosphoproteome.</title>
        <authorList>
            <person name="Zhou H."/>
            <person name="Di Palma S."/>
            <person name="Preisinger C."/>
            <person name="Peng M."/>
            <person name="Polat A.N."/>
            <person name="Heck A.J."/>
            <person name="Mohammed S."/>
        </authorList>
    </citation>
    <scope>PHOSPHORYLATION [LARGE SCALE ANALYSIS] AT TYR-754; SER-1714 AND SER-1943</scope>
    <scope>IDENTIFICATION BY MASS SPECTROMETRY [LARGE SCALE ANALYSIS]</scope>
    <source>
        <tissue>Cervix carcinoma</tissue>
        <tissue>Erythroleukemia</tissue>
    </source>
</reference>
<reference key="40">
    <citation type="journal article" date="2014" name="J. Proteomics">
        <title>An enzyme assisted RP-RPLC approach for in-depth analysis of human liver phosphoproteome.</title>
        <authorList>
            <person name="Bian Y."/>
            <person name="Song C."/>
            <person name="Cheng K."/>
            <person name="Dong M."/>
            <person name="Wang F."/>
            <person name="Huang J."/>
            <person name="Sun D."/>
            <person name="Wang L."/>
            <person name="Ye M."/>
            <person name="Zou H."/>
        </authorList>
    </citation>
    <scope>PHOSPHORYLATION [LARGE SCALE ANALYSIS] AT SER-628 AND SER-1943</scope>
    <scope>IDENTIFICATION BY MASS SPECTROMETRY [LARGE SCALE ANALYSIS]</scope>
    <source>
        <tissue>Liver</tissue>
    </source>
</reference>
<reference key="41">
    <citation type="journal article" date="2015" name="Proteomics">
        <title>N-terminome analysis of the human mitochondrial proteome.</title>
        <authorList>
            <person name="Vaca Jacome A.S."/>
            <person name="Rabilloud T."/>
            <person name="Schaeffer-Reiss C."/>
            <person name="Rompais M."/>
            <person name="Ayoub D."/>
            <person name="Lane L."/>
            <person name="Bairoch A."/>
            <person name="Van Dorsselaer A."/>
            <person name="Carapito C."/>
        </authorList>
    </citation>
    <scope>IDENTIFICATION BY MASS SPECTROMETRY [LARGE SCALE ANALYSIS]</scope>
</reference>
<reference key="42">
    <citation type="journal article" date="2016" name="J. Cell Biol.">
        <title>A Rab3a-dependent complex essential for lysosome positioning and plasma membrane repair.</title>
        <authorList>
            <person name="Encarnacao M."/>
            <person name="Espada L."/>
            <person name="Escrevente C."/>
            <person name="Mateus D."/>
            <person name="Ramalho J."/>
            <person name="Michelet X."/>
            <person name="Santarino I."/>
            <person name="Hsu V.W."/>
            <person name="Brenner M.B."/>
            <person name="Barral D.C."/>
            <person name="Vieira O.V."/>
        </authorList>
    </citation>
    <scope>INTERACTION WITH RAB3A</scope>
</reference>
<reference key="43">
    <citation type="journal article" date="2016" name="Elife">
        <title>The E3 ligase Ubr3 regulates Usher syndrome and MYH9 disorder proteins in the auditory organs of Drosophila and mammals.</title>
        <authorList>
            <person name="Li T."/>
            <person name="Giagtzoglou N."/>
            <person name="Eberl D.F."/>
            <person name="Jaiswal S.N."/>
            <person name="Cai T."/>
            <person name="Godt D."/>
            <person name="Groves A.K."/>
            <person name="Bellen H.J."/>
        </authorList>
    </citation>
    <scope>SUBCELLULAR LOCATION</scope>
    <scope>UBIQUITINATION</scope>
</reference>
<reference key="44">
    <citation type="journal article" date="2017" name="Mol. Biol. Cell">
        <title>LIMCH1 regulates nonmuscle myosin-II activity and suppresses cell migration.</title>
        <authorList>
            <person name="Lin Y.H."/>
            <person name="Zhen Y.Y."/>
            <person name="Chien K.Y."/>
            <person name="Lee I.C."/>
            <person name="Lin W.C."/>
            <person name="Chen M.Y."/>
            <person name="Pai L.M."/>
        </authorList>
    </citation>
    <scope>INTERACTION WITH LIMCH1</scope>
    <scope>REGION</scope>
</reference>
<reference key="45">
    <citation type="journal article" date="2017" name="Sci. Rep.">
        <title>C9ORF135 encodes a membrane protein whose expression is related to pluripotency in human embryonic stem cells.</title>
        <authorList>
            <person name="Zhou S."/>
            <person name="Liu Y."/>
            <person name="Ma Y."/>
            <person name="Zhang X."/>
            <person name="Li Y."/>
            <person name="Wen J."/>
        </authorList>
    </citation>
    <scope>INTERACTION WITH CFAP95</scope>
</reference>
<reference key="46">
    <citation type="journal article" date="2024" name="Nature">
        <title>TMEFF1 is a neuron-specific restriction factor for herpes simplex virus.</title>
        <authorList>
            <person name="Dai Y."/>
            <person name="Idorn M."/>
            <person name="Serrero M.C."/>
            <person name="Pan X."/>
            <person name="Thomsen E.A."/>
            <person name="Narita R."/>
            <person name="Maimaitili M."/>
            <person name="Qian X."/>
            <person name="Iversen M.B."/>
            <person name="Reinert L.S."/>
            <person name="Flygaard R.K."/>
            <person name="Chen M."/>
            <person name="Ding X."/>
            <person name="Zhang B.C."/>
            <person name="Carter-Timofte M.E."/>
            <person name="Lu Q."/>
            <person name="Jiang Z."/>
            <person name="Zhong Y."/>
            <person name="Zhang S."/>
            <person name="Da L."/>
            <person name="Zhu J."/>
            <person name="Denham M."/>
            <person name="Nissen P."/>
            <person name="Mogensen T.H."/>
            <person name="Mikkelsen J.G."/>
            <person name="Zhang S.Y."/>
            <person name="Casanova J.L."/>
            <person name="Cai Y."/>
            <person name="Paludan S.R."/>
        </authorList>
    </citation>
    <scope>FUNCTION (MICROBIAL INFECTION)</scope>
</reference>
<reference key="47">
    <citation type="journal article" date="2000" name="Am. J. Hum. Genet.">
        <title>Human nonsyndromic hereditary deafness DFNA17 is due to a mutation in nonmuscle myosin MYH9.</title>
        <authorList>
            <person name="Lalwani A.K."/>
            <person name="Goldstein J.A."/>
            <person name="Kelley M.J."/>
            <person name="Luxford W."/>
            <person name="Castelein C.M."/>
            <person name="Mhatre A.N."/>
        </authorList>
    </citation>
    <scope>VARIANT DFNA17 HIS-705</scope>
</reference>
<reference key="48">
    <citation type="journal article" date="2000" name="Nat. Genet.">
        <title>Mutations in MYH9 result in the May-Hegglin anomaly, and Fechtner and Sebastian syndromes.</title>
        <authorList>
            <person name="Seri M."/>
            <person name="Cusano M."/>
            <person name="Gangarossa S."/>
            <person name="Caridi G."/>
            <person name="Bordo D."/>
            <person name="Lo Nigro C."/>
            <person name="Ghiggeri G.M."/>
            <person name="Ravazzolo R."/>
            <person name="Savino M."/>
            <person name="Del Vecchio M."/>
            <person name="d'Apolito M."/>
            <person name="Iolascon A."/>
            <person name="Zelante L.L."/>
            <person name="Savoia A."/>
            <person name="Balduini C.L."/>
            <person name="Noris P."/>
            <person name="Magrini U."/>
            <person name="Belletti S."/>
            <person name="Heath K.E."/>
            <person name="Babcock M."/>
            <person name="Glucksman M.J."/>
            <person name="Aliprandis E."/>
            <person name="Bizzaro N."/>
            <person name="Desnick R.J."/>
            <person name="Martignetti J.A."/>
        </authorList>
    </citation>
    <scope>VARIANTS MATINS LYS-93; CYS-702; CYS-1165; HIS-1424 AND LYS-1841</scope>
</reference>
<reference key="49">
    <citation type="journal article" date="2000" name="Nat. Genet.">
        <title>Mutation of MYH9, encoding non-muscle myosin heavy chain A, in May-Hegglin anomaly.</title>
        <authorList>
            <person name="Kelley M.J."/>
            <person name="Jawien W."/>
            <person name="Ortel T.L."/>
            <person name="Korczak J.F."/>
        </authorList>
    </citation>
    <scope>VARIANTS MATINS ILE-1155 AND LYS-1841</scope>
</reference>
<reference key="50">
    <citation type="journal article" date="2001" name="Am. J. Hum. Genet.">
        <title>Nonmuscle myosin heavy chain IIA mutations define a spectrum of autosomal dominant macrothrombocytopenias: May-Hegglin anomaly and Fechtner, Sebastian, Epstein, and Alport-like syndromes.</title>
        <authorList>
            <person name="Heath K.E."/>
            <person name="Campos-Barros A."/>
            <person name="Toren A."/>
            <person name="Rozenfeld-Granot G."/>
            <person name="Carlsson L.E."/>
            <person name="Savige J."/>
            <person name="Denison J.C."/>
            <person name="Gregory M.C."/>
            <person name="White J.G."/>
            <person name="Barker D.F."/>
            <person name="Greinacher A."/>
            <person name="Epstein C.J."/>
            <person name="Glucksman M.J."/>
            <person name="Martignetti J.A."/>
        </authorList>
    </citation>
    <scope>VARIANTS MATINS ASN-373; CYS-702; HIS-702; PRO-1114; ASN-1424; HIS-1424 AND LYS-1841</scope>
</reference>
<reference key="51">
    <citation type="journal article" date="2001" name="J. Hum. Genet.">
        <title>Identification of six novel MYH9 mutations and genotype-phenotype relationships in autosomal dominant macrothrombocytopenia with leukocyte inclusions.</title>
        <authorList>
            <person name="Kunishima S."/>
            <person name="Matsushita T."/>
            <person name="Kojima T."/>
            <person name="Amemiya N."/>
            <person name="Choi Y.M."/>
            <person name="Hosaka N."/>
            <person name="Inoue M."/>
            <person name="Jung Y."/>
            <person name="Mamiya S."/>
            <person name="Matsumoto K."/>
            <person name="Miyajima Y."/>
            <person name="Zhang G."/>
            <person name="Ruan C."/>
            <person name="Saito K."/>
            <person name="Song K.S."/>
            <person name="Yoon H.-J."/>
            <person name="Kamiya T."/>
            <person name="Saito H."/>
        </authorList>
    </citation>
    <scope>VARIANTS MATINS THR-95; CYS-1165; LEU-1165; 1205-LEU--GLN-1207 DEL; HIS-1424; ASN-1424; TYR-1424 AND LYS-1841</scope>
    <scope>VARIANT VAL-1626</scope>
</reference>
<reference key="52">
    <citation type="journal article" date="2002" name="Hum. Genet.">
        <title>Epstein syndrome: another renal disorder with mutations in the nonmuscle myosin heavy chain 9 gene.</title>
        <authorList>
            <person name="Seri M."/>
            <person name="Savino M."/>
            <person name="Bordo D."/>
            <person name="Cusano R."/>
            <person name="Rocca B."/>
            <person name="Meloni I."/>
            <person name="Di Bari F."/>
            <person name="Koivisto P.A."/>
            <person name="Bolognesi M."/>
            <person name="Ghiggeri G.M."/>
            <person name="Landolfi R."/>
            <person name="Balduini C.L."/>
            <person name="Zelante L."/>
            <person name="Ravazzolo R."/>
            <person name="Renieri A."/>
            <person name="Savoia A."/>
        </authorList>
    </citation>
    <scope>VARIANT MATINS HIS-702</scope>
</reference>
<reference key="53">
    <citation type="journal article" date="2002" name="J. Am. Soc. Nephrol.">
        <title>Expression of the nonmuscle myosin heavy chain IIA in the human kidney and screening for MYH9 mutations in Epstein and Fechtner syndromes.</title>
        <authorList>
            <person name="Arrondel C."/>
            <person name="Vodovar N."/>
            <person name="Knebelmann B."/>
            <person name="Gruenfeld J.-P."/>
            <person name="Gubler M.-C."/>
            <person name="Antignac C."/>
            <person name="Heidet L."/>
        </authorList>
    </citation>
    <scope>VARIANTS MATINS LEU-96; LEU-1165; TRP-1400; ASN-1424 AND LYS-1841</scope>
    <scope>TISSUE SPECIFICITY</scope>
</reference>
<reference key="54">
    <citation type="journal article" date="2003" name="Blood">
        <title>Asp1424Asn MYH9 mutation results in an unstable protein responsible for the phenotypes in May-Hegglin anomaly/Fechtner syndrome.</title>
        <authorList>
            <person name="Deutsch S."/>
            <person name="Rideau A."/>
            <person name="Bochaton-Piallat M.-L."/>
            <person name="Merla G."/>
            <person name="Geinoz A."/>
            <person name="Gabbiani G."/>
            <person name="Schwede T."/>
            <person name="Matthes T."/>
            <person name="Antonarakis S.E."/>
            <person name="Beris P."/>
        </authorList>
    </citation>
    <scope>CHARACTERIZATION OF VARIANT MATINS ASN-1424</scope>
</reference>
<reference key="55">
    <citation type="journal article" date="2003" name="Lab. Invest.">
        <title>Immunofluorescence analysis of neutrophil nonmuscle myosin heavy chain-A in MYH9 disorders: association of subcellular localization with MYH9 mutations.</title>
        <authorList>
            <person name="Kunishima S."/>
            <person name="Matsushita T."/>
            <person name="Kojima T."/>
            <person name="Sako M."/>
            <person name="Kimura F."/>
            <person name="Jo E.-K."/>
            <person name="Inoue C."/>
            <person name="Kamiya T."/>
            <person name="Saito H."/>
        </authorList>
    </citation>
    <scope>VARIANTS MATINS CYS-1165; LEU-1165; 1205-LEU--GLN-1207 DEL; HIS-1424; ASN-1424; TYR-1424; VAL-1816 AND LYS-1841</scope>
</reference>
<reference key="56">
    <citation type="journal article" date="2003" name="Medicine (Baltimore)">
        <title>MYH9-related disease: may-Hegglin anomaly, Sebastian syndrome, Fechtner syndrome, and Epstein syndrome are not distinct entities but represent a variable expression of a single illness.</title>
        <authorList>
            <person name="Seri M."/>
            <person name="Pecci A."/>
            <person name="Di Bari F."/>
            <person name="Cusano R."/>
            <person name="Savino M."/>
            <person name="Panza E."/>
            <person name="Nigro A."/>
            <person name="Noris P."/>
            <person name="Gangarossa S."/>
            <person name="Rocca B."/>
            <person name="Gresele P."/>
            <person name="Bizzaro N."/>
            <person name="Malatesta P."/>
            <person name="Koivisto P.A."/>
            <person name="Longo I."/>
            <person name="Musso R."/>
            <person name="Pecoraro C."/>
            <person name="Iolascon A."/>
            <person name="Magrini U."/>
            <person name="Rodriguez Soriano J."/>
            <person name="Renieri A."/>
            <person name="Ghiggeri G.M."/>
            <person name="Ravazzolo R."/>
            <person name="Balduini C.L."/>
            <person name="Savoia A."/>
        </authorList>
    </citation>
    <scope>VARIANTS MATINS CYS-702; HIS-702; GLN-910; 1066-GLU--ALA-1072 DEL; ILE-1155; ASN-1424 AND HIS-1424</scope>
</reference>
<reference key="57">
    <citation type="journal article" date="2003" name="Otol. Neurotol.">
        <title>Macrothrombocytopenia and progressive deafness is due to a mutation in MYH9.</title>
        <authorList>
            <person name="Mhatre A.N."/>
            <person name="Kim Y."/>
            <person name="Brodie H.A."/>
            <person name="Lalwani A.K."/>
        </authorList>
    </citation>
    <scope>VARIANT MATINS ASN-1424</scope>
</reference>
<reference key="58">
    <citation type="journal article" date="2006" name="Am. J. Med. Genet. A">
        <title>Bladder exstrophy and Epstein type congenital macrothrombocytopenia: evidence for a common cause?</title>
        <authorList>
            <person name="Utsch B."/>
            <person name="DiFeo A."/>
            <person name="Kujat A."/>
            <person name="Karle S."/>
            <person name="Schuster V."/>
            <person name="Lenk H."/>
            <person name="Jacobs U."/>
            <person name="Mueller M."/>
            <person name="Doetsch J."/>
            <person name="Rascher W."/>
            <person name="Reutter H."/>
            <person name="Martignetti J.A."/>
            <person name="Ludwig M."/>
            <person name="Troebs R.-B."/>
        </authorList>
    </citation>
    <scope>VARIANT MATINS LEU-96</scope>
</reference>
<reference key="59">
    <citation type="journal article" date="2006" name="Science">
        <title>The consensus coding sequences of human breast and colorectal cancers.</title>
        <authorList>
            <person name="Sjoeblom T."/>
            <person name="Jones S."/>
            <person name="Wood L.D."/>
            <person name="Parsons D.W."/>
            <person name="Lin J."/>
            <person name="Barber T.D."/>
            <person name="Mandelker D."/>
            <person name="Leary R.J."/>
            <person name="Ptak J."/>
            <person name="Silliman N."/>
            <person name="Szabo S."/>
            <person name="Buckhaults P."/>
            <person name="Farrell C."/>
            <person name="Meeh P."/>
            <person name="Markowitz S.D."/>
            <person name="Willis J."/>
            <person name="Dawson D."/>
            <person name="Willson J.K.V."/>
            <person name="Gazdar A.F."/>
            <person name="Hartigan J."/>
            <person name="Wu L."/>
            <person name="Liu C."/>
            <person name="Parmigiani G."/>
            <person name="Park B.H."/>
            <person name="Bachman K.E."/>
            <person name="Papadopoulos N."/>
            <person name="Vogelstein B."/>
            <person name="Kinzler K.W."/>
            <person name="Velculescu V.E."/>
        </authorList>
    </citation>
    <scope>VARIANT [LARGE SCALE ANALYSIS] ASN-810</scope>
</reference>
<reference key="60">
    <citation type="journal article" date="2008" name="Hum. Mutat.">
        <title>Position of nonmuscle myosin heavy chain IIA (NMMHC-IIA) mutations predicts the natural history of MYH9-related disease.</title>
        <authorList>
            <person name="Pecci A."/>
            <person name="Panza E."/>
            <person name="Pujol-Moix N."/>
            <person name="Klersy C."/>
            <person name="Di Bari F."/>
            <person name="Bozzi V."/>
            <person name="Gresele P."/>
            <person name="Lethagen S."/>
            <person name="Fabris F."/>
            <person name="Dufour C."/>
            <person name="Granata A."/>
            <person name="Doubek M."/>
            <person name="Pecoraro C."/>
            <person name="Koivisto P.A."/>
            <person name="Heller P.G."/>
            <person name="Iolascon A."/>
            <person name="Alvisi P."/>
            <person name="Schwabe D."/>
            <person name="De Candia E."/>
            <person name="Rocca B."/>
            <person name="Russo U."/>
            <person name="Ramenghi U."/>
            <person name="Noris P."/>
            <person name="Seri M."/>
            <person name="Balduini C.L."/>
            <person name="Savoia A."/>
        </authorList>
    </citation>
    <scope>POSITION OF MUTATIONS IN MYH9-RELATED DISEASE</scope>
</reference>
<reference key="61">
    <citation type="journal article" date="2019" name="Eur. J. Hum. Genet.">
        <title>Hearing impairment locus heterogeneity and identification of PLS1 as a new autosomal dominant gene in Hungarian Roma.</title>
        <authorList>
            <person name="Schrauwen I."/>
            <person name="Melegh B.I."/>
            <person name="Chakchouk I."/>
            <person name="Acharya A."/>
            <person name="Nasir A."/>
            <person name="Poston A."/>
            <person name="Cornejo-Sanchez D.M."/>
            <person name="Szabo Z."/>
            <person name="Karosi T."/>
            <person name="Bene J."/>
            <person name="Melegh B."/>
            <person name="Leal S.M."/>
        </authorList>
    </citation>
    <scope>VARIANT DFNA17 LYS-1228</scope>
</reference>
<dbReference type="EMBL" id="CR456526">
    <property type="protein sequence ID" value="CAG30412.1"/>
    <property type="molecule type" value="mRNA"/>
</dbReference>
<dbReference type="EMBL" id="AB191263">
    <property type="protein sequence ID" value="BAD52439.1"/>
    <property type="molecule type" value="mRNA"/>
</dbReference>
<dbReference type="EMBL" id="AL832639">
    <property type="protein sequence ID" value="CAD89954.1"/>
    <property type="status" value="ALT_FRAME"/>
    <property type="molecule type" value="mRNA"/>
</dbReference>
<dbReference type="EMBL" id="AB290175">
    <property type="protein sequence ID" value="BAG06729.1"/>
    <property type="molecule type" value="mRNA"/>
</dbReference>
<dbReference type="EMBL" id="Z82215">
    <property type="status" value="NOT_ANNOTATED_CDS"/>
    <property type="molecule type" value="Genomic_DNA"/>
</dbReference>
<dbReference type="EMBL" id="CH471095">
    <property type="protein sequence ID" value="EAW60096.1"/>
    <property type="molecule type" value="Genomic_DNA"/>
</dbReference>
<dbReference type="EMBL" id="M81105">
    <property type="protein sequence ID" value="AAA59888.1"/>
    <property type="molecule type" value="mRNA"/>
</dbReference>
<dbReference type="EMBL" id="AK291609">
    <property type="protein sequence ID" value="BAF84298.1"/>
    <property type="molecule type" value="mRNA"/>
</dbReference>
<dbReference type="EMBL" id="M69180">
    <property type="protein sequence ID" value="AAA61765.1"/>
    <property type="molecule type" value="mRNA"/>
</dbReference>
<dbReference type="EMBL" id="M31013">
    <property type="protein sequence ID" value="AAA36349.1"/>
    <property type="molecule type" value="mRNA"/>
</dbReference>
<dbReference type="CCDS" id="CCDS13927.1">
    <molecule id="P35579-1"/>
</dbReference>
<dbReference type="PIR" id="A61231">
    <property type="entry name" value="A61231"/>
</dbReference>
<dbReference type="RefSeq" id="NP_002464.1">
    <molecule id="P35579-1"/>
    <property type="nucleotide sequence ID" value="NM_002473.6"/>
</dbReference>
<dbReference type="RefSeq" id="XP_011528499.1">
    <property type="nucleotide sequence ID" value="XM_011530197.2"/>
</dbReference>
<dbReference type="RefSeq" id="XP_016884292.1">
    <property type="nucleotide sequence ID" value="XM_017028803.1"/>
</dbReference>
<dbReference type="RefSeq" id="XP_016884293.1">
    <property type="nucleotide sequence ID" value="XM_017028804.1"/>
</dbReference>
<dbReference type="RefSeq" id="XP_016884294.1">
    <property type="nucleotide sequence ID" value="XM_017028805.1"/>
</dbReference>
<dbReference type="RefSeq" id="XP_016884295.1">
    <property type="nucleotide sequence ID" value="XM_017028806.1"/>
</dbReference>
<dbReference type="PDB" id="2LNK">
    <property type="method" value="NMR"/>
    <property type="chains" value="C=1897-1935"/>
</dbReference>
<dbReference type="PDB" id="3ZWH">
    <property type="method" value="X-ray"/>
    <property type="resolution" value="1.94 A"/>
    <property type="chains" value="Q=1893-1937"/>
</dbReference>
<dbReference type="PDB" id="4CFQ">
    <property type="method" value="X-ray"/>
    <property type="resolution" value="1.37 A"/>
    <property type="chains" value="Q/R=1893-1937"/>
</dbReference>
<dbReference type="PDB" id="4CFR">
    <property type="method" value="X-ray"/>
    <property type="resolution" value="1.40 A"/>
    <property type="chains" value="Q=1893-1937"/>
</dbReference>
<dbReference type="PDB" id="4ETO">
    <property type="method" value="X-ray"/>
    <property type="resolution" value="1.54 A"/>
    <property type="chains" value="P=1908-1923"/>
</dbReference>
<dbReference type="PDBsum" id="2LNK"/>
<dbReference type="PDBsum" id="3ZWH"/>
<dbReference type="PDBsum" id="4CFQ"/>
<dbReference type="PDBsum" id="4CFR"/>
<dbReference type="PDBsum" id="4ETO"/>
<dbReference type="BMRB" id="P35579"/>
<dbReference type="SMR" id="P35579"/>
<dbReference type="BioGRID" id="110712">
    <property type="interactions" value="767"/>
</dbReference>
<dbReference type="CORUM" id="P35579"/>
<dbReference type="DIP" id="DIP-33103N"/>
<dbReference type="FunCoup" id="P35579">
    <property type="interactions" value="975"/>
</dbReference>
<dbReference type="IntAct" id="P35579">
    <property type="interactions" value="397"/>
</dbReference>
<dbReference type="MINT" id="P35579"/>
<dbReference type="STRING" id="9606.ENSP00000216181"/>
<dbReference type="BindingDB" id="P35579"/>
<dbReference type="ChEMBL" id="CHEMBL2189151"/>
<dbReference type="DrugBank" id="DB11638">
    <property type="generic name" value="Artenimol"/>
</dbReference>
<dbReference type="CarbonylDB" id="P35579"/>
<dbReference type="GlyCosmos" id="P35579">
    <property type="glycosylation" value="6 sites, 2 glycans"/>
</dbReference>
<dbReference type="GlyGen" id="P35579">
    <property type="glycosylation" value="11 sites, 1 N-linked glycan (1 site), 2 O-linked glycans (10 sites)"/>
</dbReference>
<dbReference type="iPTMnet" id="P35579"/>
<dbReference type="MetOSite" id="P35579"/>
<dbReference type="PhosphoSitePlus" id="P35579"/>
<dbReference type="SwissPalm" id="P35579"/>
<dbReference type="BioMuta" id="MYH9"/>
<dbReference type="DMDM" id="6166599"/>
<dbReference type="jPOST" id="P35579"/>
<dbReference type="MassIVE" id="P35579"/>
<dbReference type="PaxDb" id="9606-ENSP00000216181"/>
<dbReference type="PeptideAtlas" id="P35579"/>
<dbReference type="PRIDE" id="P35579"/>
<dbReference type="ProteomicsDB" id="55093">
    <molecule id="P35579-1"/>
</dbReference>
<dbReference type="ProteomicsDB" id="55094">
    <molecule id="P35579-2"/>
</dbReference>
<dbReference type="Pumba" id="P35579"/>
<dbReference type="TopDownProteomics" id="P35579-1">
    <molecule id="P35579-1"/>
</dbReference>
<dbReference type="ABCD" id="P35579">
    <property type="antibodies" value="11 sequenced antibodies"/>
</dbReference>
<dbReference type="Antibodypedia" id="887">
    <property type="antibodies" value="504 antibodies from 42 providers"/>
</dbReference>
<dbReference type="DNASU" id="4627"/>
<dbReference type="Ensembl" id="ENST00000216181.11">
    <molecule id="P35579-1"/>
    <property type="protein sequence ID" value="ENSP00000216181.6"/>
    <property type="gene ID" value="ENSG00000100345.23"/>
</dbReference>
<dbReference type="GeneID" id="4627"/>
<dbReference type="KEGG" id="hsa:4627"/>
<dbReference type="MANE-Select" id="ENST00000216181.11">
    <property type="protein sequence ID" value="ENSP00000216181.6"/>
    <property type="RefSeq nucleotide sequence ID" value="NM_002473.6"/>
    <property type="RefSeq protein sequence ID" value="NP_002464.1"/>
</dbReference>
<dbReference type="UCSC" id="uc003apg.4">
    <molecule id="P35579-1"/>
    <property type="organism name" value="human"/>
</dbReference>
<dbReference type="AGR" id="HGNC:7579"/>
<dbReference type="CTD" id="4627"/>
<dbReference type="DisGeNET" id="4627"/>
<dbReference type="GeneCards" id="MYH9"/>
<dbReference type="GeneReviews" id="MYH9"/>
<dbReference type="HGNC" id="HGNC:7579">
    <property type="gene designation" value="MYH9"/>
</dbReference>
<dbReference type="HPA" id="ENSG00000100345">
    <property type="expression patterns" value="Low tissue specificity"/>
</dbReference>
<dbReference type="MalaCards" id="MYH9"/>
<dbReference type="MIM" id="155100">
    <property type="type" value="phenotype"/>
</dbReference>
<dbReference type="MIM" id="160775">
    <property type="type" value="gene"/>
</dbReference>
<dbReference type="MIM" id="603622">
    <property type="type" value="phenotype"/>
</dbReference>
<dbReference type="neXtProt" id="NX_P35579"/>
<dbReference type="OpenTargets" id="ENSG00000100345"/>
<dbReference type="Orphanet" id="182050">
    <property type="disease" value="MYH9-related disease"/>
</dbReference>
<dbReference type="Orphanet" id="477742">
    <property type="disease" value="Nodular fasciitis"/>
</dbReference>
<dbReference type="Orphanet" id="90635">
    <property type="disease" value="Rare autosomal dominant non-syndromic sensorineural deafness type DFNA"/>
</dbReference>
<dbReference type="PharmGKB" id="PA31377"/>
<dbReference type="VEuPathDB" id="HostDB:ENSG00000100345"/>
<dbReference type="eggNOG" id="KOG0161">
    <property type="taxonomic scope" value="Eukaryota"/>
</dbReference>
<dbReference type="GeneTree" id="ENSGT00940000155632"/>
<dbReference type="HOGENOM" id="CLU_000192_4_0_1"/>
<dbReference type="InParanoid" id="P35579"/>
<dbReference type="OMA" id="DVRFLHK"/>
<dbReference type="OrthoDB" id="10254995at2759"/>
<dbReference type="PAN-GO" id="P35579">
    <property type="GO annotations" value="5 GO annotations based on evolutionary models"/>
</dbReference>
<dbReference type="PhylomeDB" id="P35579"/>
<dbReference type="TreeFam" id="TF333601"/>
<dbReference type="PathwayCommons" id="P35579"/>
<dbReference type="Reactome" id="R-HSA-1445148">
    <property type="pathway name" value="Translocation of SLC2A4 (GLUT4) to the plasma membrane"/>
</dbReference>
<dbReference type="Reactome" id="R-HSA-2029482">
    <property type="pathway name" value="Regulation of actin dynamics for phagocytic cup formation"/>
</dbReference>
<dbReference type="Reactome" id="R-HSA-3928663">
    <property type="pathway name" value="EPHA-mediated growth cone collapse"/>
</dbReference>
<dbReference type="Reactome" id="R-HSA-416572">
    <property type="pathway name" value="Sema4D induced cell migration and growth-cone collapse"/>
</dbReference>
<dbReference type="Reactome" id="R-HSA-5625740">
    <property type="pathway name" value="RHO GTPases activate PKNs"/>
</dbReference>
<dbReference type="Reactome" id="R-HSA-5625900">
    <property type="pathway name" value="RHO GTPases activate CIT"/>
</dbReference>
<dbReference type="Reactome" id="R-HSA-5627117">
    <property type="pathway name" value="RHO GTPases Activate ROCKs"/>
</dbReference>
<dbReference type="Reactome" id="R-HSA-5627123">
    <property type="pathway name" value="RHO GTPases activate PAKs"/>
</dbReference>
<dbReference type="Reactome" id="R-HSA-9662360">
    <property type="pathway name" value="Sensory processing of sound by inner hair cells of the cochlea"/>
</dbReference>
<dbReference type="Reactome" id="R-HSA-9662361">
    <property type="pathway name" value="Sensory processing of sound by outer hair cells of the cochlea"/>
</dbReference>
<dbReference type="Reactome" id="R-HSA-9662834">
    <property type="pathway name" value="CD163 mediating an anti-inflammatory response"/>
</dbReference>
<dbReference type="Reactome" id="R-HSA-9664422">
    <property type="pathway name" value="FCGR3A-mediated phagocytosis"/>
</dbReference>
<dbReference type="Reactome" id="R-HSA-9725370">
    <property type="pathway name" value="Signaling by ALK fusions and activated point mutants"/>
</dbReference>
<dbReference type="SignaLink" id="P35579"/>
<dbReference type="SIGNOR" id="P35579"/>
<dbReference type="BioGRID-ORCS" id="4627">
    <property type="hits" value="370 hits in 1180 CRISPR screens"/>
</dbReference>
<dbReference type="CD-CODE" id="91857CE7">
    <property type="entry name" value="Nucleolus"/>
</dbReference>
<dbReference type="CD-CODE" id="FB4E32DD">
    <property type="entry name" value="Presynaptic clusters and postsynaptic densities"/>
</dbReference>
<dbReference type="ChiTaRS" id="MYH9">
    <property type="organism name" value="human"/>
</dbReference>
<dbReference type="EvolutionaryTrace" id="P35579"/>
<dbReference type="GeneWiki" id="MYH9"/>
<dbReference type="GenomeRNAi" id="4627"/>
<dbReference type="Pharos" id="P35579">
    <property type="development level" value="Tbio"/>
</dbReference>
<dbReference type="PRO" id="PR:P35579"/>
<dbReference type="Proteomes" id="UP000005640">
    <property type="component" value="Chromosome 22"/>
</dbReference>
<dbReference type="RNAct" id="P35579">
    <property type="molecule type" value="protein"/>
</dbReference>
<dbReference type="Bgee" id="ENSG00000100345">
    <property type="expression patterns" value="Expressed in ascending aorta and 188 other cell types or tissues"/>
</dbReference>
<dbReference type="ExpressionAtlas" id="P35579">
    <property type="expression patterns" value="baseline and differential"/>
</dbReference>
<dbReference type="GO" id="GO:0015629">
    <property type="term" value="C:actin cytoskeleton"/>
    <property type="evidence" value="ECO:0000314"/>
    <property type="project" value="HPA"/>
</dbReference>
<dbReference type="GO" id="GO:0042641">
    <property type="term" value="C:actomyosin"/>
    <property type="evidence" value="ECO:0000314"/>
    <property type="project" value="UniProtKB"/>
</dbReference>
<dbReference type="GO" id="GO:0005826">
    <property type="term" value="C:actomyosin contractile ring"/>
    <property type="evidence" value="ECO:0000314"/>
    <property type="project" value="UniProtKB"/>
</dbReference>
<dbReference type="GO" id="GO:0005912">
    <property type="term" value="C:adherens junction"/>
    <property type="evidence" value="ECO:0007669"/>
    <property type="project" value="Ensembl"/>
</dbReference>
<dbReference type="GO" id="GO:0005903">
    <property type="term" value="C:brush border"/>
    <property type="evidence" value="ECO:0007669"/>
    <property type="project" value="Ensembl"/>
</dbReference>
<dbReference type="GO" id="GO:0031252">
    <property type="term" value="C:cell leading edge"/>
    <property type="evidence" value="ECO:0000314"/>
    <property type="project" value="UniProtKB"/>
</dbReference>
<dbReference type="GO" id="GO:0009986">
    <property type="term" value="C:cell surface"/>
    <property type="evidence" value="ECO:0000314"/>
    <property type="project" value="UniProt"/>
</dbReference>
<dbReference type="GO" id="GO:0032154">
    <property type="term" value="C:cleavage furrow"/>
    <property type="evidence" value="ECO:0000314"/>
    <property type="project" value="UniProtKB"/>
</dbReference>
<dbReference type="GO" id="GO:0060473">
    <property type="term" value="C:cortical granule"/>
    <property type="evidence" value="ECO:0000250"/>
    <property type="project" value="UniProtKB"/>
</dbReference>
<dbReference type="GO" id="GO:0005737">
    <property type="term" value="C:cytoplasm"/>
    <property type="evidence" value="ECO:0000314"/>
    <property type="project" value="UniProtKB"/>
</dbReference>
<dbReference type="GO" id="GO:0009898">
    <property type="term" value="C:cytoplasmic side of plasma membrane"/>
    <property type="evidence" value="ECO:0000314"/>
    <property type="project" value="MGI"/>
</dbReference>
<dbReference type="GO" id="GO:0005829">
    <property type="term" value="C:cytosol"/>
    <property type="evidence" value="ECO:0000314"/>
    <property type="project" value="HPA"/>
</dbReference>
<dbReference type="GO" id="GO:0070062">
    <property type="term" value="C:extracellular exosome"/>
    <property type="evidence" value="ECO:0007005"/>
    <property type="project" value="UniProtKB"/>
</dbReference>
<dbReference type="GO" id="GO:0005925">
    <property type="term" value="C:focal adhesion"/>
    <property type="evidence" value="ECO:0007669"/>
    <property type="project" value="Ensembl"/>
</dbReference>
<dbReference type="GO" id="GO:0001772">
    <property type="term" value="C:immunological synapse"/>
    <property type="evidence" value="ECO:0000314"/>
    <property type="project" value="MGI"/>
</dbReference>
<dbReference type="GO" id="GO:0016020">
    <property type="term" value="C:membrane"/>
    <property type="evidence" value="ECO:0007005"/>
    <property type="project" value="UniProtKB"/>
</dbReference>
<dbReference type="GO" id="GO:0032982">
    <property type="term" value="C:myosin filament"/>
    <property type="evidence" value="ECO:0000318"/>
    <property type="project" value="GO_Central"/>
</dbReference>
<dbReference type="GO" id="GO:0016460">
    <property type="term" value="C:myosin II complex"/>
    <property type="evidence" value="ECO:0000314"/>
    <property type="project" value="UniProtKB"/>
</dbReference>
<dbReference type="GO" id="GO:0097513">
    <property type="term" value="C:myosin II filament"/>
    <property type="evidence" value="ECO:0000314"/>
    <property type="project" value="UniProtKB"/>
</dbReference>
<dbReference type="GO" id="GO:0031594">
    <property type="term" value="C:neuromuscular junction"/>
    <property type="evidence" value="ECO:0007669"/>
    <property type="project" value="Ensembl"/>
</dbReference>
<dbReference type="GO" id="GO:0016604">
    <property type="term" value="C:nuclear body"/>
    <property type="evidence" value="ECO:0000314"/>
    <property type="project" value="HPA"/>
</dbReference>
<dbReference type="GO" id="GO:0005634">
    <property type="term" value="C:nucleus"/>
    <property type="evidence" value="ECO:0000314"/>
    <property type="project" value="UniProtKB"/>
</dbReference>
<dbReference type="GO" id="GO:0005886">
    <property type="term" value="C:plasma membrane"/>
    <property type="evidence" value="ECO:0000314"/>
    <property type="project" value="HPA"/>
</dbReference>
<dbReference type="GO" id="GO:0032991">
    <property type="term" value="C:protein-containing complex"/>
    <property type="evidence" value="ECO:0000314"/>
    <property type="project" value="UniProtKB"/>
</dbReference>
<dbReference type="GO" id="GO:0001726">
    <property type="term" value="C:ruffle"/>
    <property type="evidence" value="ECO:0000314"/>
    <property type="project" value="UniProtKB"/>
</dbReference>
<dbReference type="GO" id="GO:0005819">
    <property type="term" value="C:spindle"/>
    <property type="evidence" value="ECO:0007669"/>
    <property type="project" value="Ensembl"/>
</dbReference>
<dbReference type="GO" id="GO:0001725">
    <property type="term" value="C:stress fiber"/>
    <property type="evidence" value="ECO:0000314"/>
    <property type="project" value="UniProtKB"/>
</dbReference>
<dbReference type="GO" id="GO:0001931">
    <property type="term" value="C:uropod"/>
    <property type="evidence" value="ECO:0000314"/>
    <property type="project" value="MGI"/>
</dbReference>
<dbReference type="GO" id="GO:0003779">
    <property type="term" value="F:actin binding"/>
    <property type="evidence" value="ECO:0000314"/>
    <property type="project" value="MGI"/>
</dbReference>
<dbReference type="GO" id="GO:0051015">
    <property type="term" value="F:actin filament binding"/>
    <property type="evidence" value="ECO:0000314"/>
    <property type="project" value="UniProtKB"/>
</dbReference>
<dbReference type="GO" id="GO:0043531">
    <property type="term" value="F:ADP binding"/>
    <property type="evidence" value="ECO:0000314"/>
    <property type="project" value="MGI"/>
</dbReference>
<dbReference type="GO" id="GO:0005524">
    <property type="term" value="F:ATP binding"/>
    <property type="evidence" value="ECO:0000314"/>
    <property type="project" value="MGI"/>
</dbReference>
<dbReference type="GO" id="GO:0045296">
    <property type="term" value="F:cadherin binding"/>
    <property type="evidence" value="ECO:0007005"/>
    <property type="project" value="BHF-UCL"/>
</dbReference>
<dbReference type="GO" id="GO:0005516">
    <property type="term" value="F:calmodulin binding"/>
    <property type="evidence" value="ECO:0007669"/>
    <property type="project" value="UniProtKB-KW"/>
</dbReference>
<dbReference type="GO" id="GO:0003774">
    <property type="term" value="F:cytoskeletal motor activity"/>
    <property type="evidence" value="ECO:0000303"/>
    <property type="project" value="UniProtKB"/>
</dbReference>
<dbReference type="GO" id="GO:0042802">
    <property type="term" value="F:identical protein binding"/>
    <property type="evidence" value="ECO:0000353"/>
    <property type="project" value="IntAct"/>
</dbReference>
<dbReference type="GO" id="GO:0005178">
    <property type="term" value="F:integrin binding"/>
    <property type="evidence" value="ECO:0000314"/>
    <property type="project" value="UniProtKB"/>
</dbReference>
<dbReference type="GO" id="GO:0000146">
    <property type="term" value="F:microfilament motor activity"/>
    <property type="evidence" value="ECO:0000314"/>
    <property type="project" value="UniProtKB"/>
</dbReference>
<dbReference type="GO" id="GO:0019904">
    <property type="term" value="F:protein domain specific binding"/>
    <property type="evidence" value="ECO:0000353"/>
    <property type="project" value="UniProtKB"/>
</dbReference>
<dbReference type="GO" id="GO:0042803">
    <property type="term" value="F:protein homodimerization activity"/>
    <property type="evidence" value="ECO:0000314"/>
    <property type="project" value="UniProtKB"/>
</dbReference>
<dbReference type="GO" id="GO:0043495">
    <property type="term" value="F:protein-membrane adaptor activity"/>
    <property type="evidence" value="ECO:0000315"/>
    <property type="project" value="UniProtKB"/>
</dbReference>
<dbReference type="GO" id="GO:0003723">
    <property type="term" value="F:RNA binding"/>
    <property type="evidence" value="ECO:0007005"/>
    <property type="project" value="UniProtKB"/>
</dbReference>
<dbReference type="GO" id="GO:0001618">
    <property type="term" value="F:virus receptor activity"/>
    <property type="evidence" value="ECO:0000314"/>
    <property type="project" value="UniProtKB"/>
</dbReference>
<dbReference type="GO" id="GO:0030036">
    <property type="term" value="P:actin cytoskeleton organization"/>
    <property type="evidence" value="ECO:0000315"/>
    <property type="project" value="UniProtKB"/>
</dbReference>
<dbReference type="GO" id="GO:0030048">
    <property type="term" value="P:actin filament-based movement"/>
    <property type="evidence" value="ECO:0000314"/>
    <property type="project" value="UniProtKB"/>
</dbReference>
<dbReference type="GO" id="GO:0031032">
    <property type="term" value="P:actomyosin structure organization"/>
    <property type="evidence" value="ECO:0000314"/>
    <property type="project" value="UniProtKB"/>
</dbReference>
<dbReference type="GO" id="GO:0001525">
    <property type="term" value="P:angiogenesis"/>
    <property type="evidence" value="ECO:0000314"/>
    <property type="project" value="UniProtKB"/>
</dbReference>
<dbReference type="GO" id="GO:0043534">
    <property type="term" value="P:blood vessel endothelial cell migration"/>
    <property type="evidence" value="ECO:0000315"/>
    <property type="project" value="UniProtKB"/>
</dbReference>
<dbReference type="GO" id="GO:0060471">
    <property type="term" value="P:cortical granule exocytosis"/>
    <property type="evidence" value="ECO:0000250"/>
    <property type="project" value="UniProtKB"/>
</dbReference>
<dbReference type="GO" id="GO:0032506">
    <property type="term" value="P:cytokinetic process"/>
    <property type="evidence" value="ECO:0000315"/>
    <property type="project" value="UniProtKB"/>
</dbReference>
<dbReference type="GO" id="GO:0035987">
    <property type="term" value="P:endodermal cell differentiation"/>
    <property type="evidence" value="ECO:0007669"/>
    <property type="project" value="Ensembl"/>
</dbReference>
<dbReference type="GO" id="GO:0051295">
    <property type="term" value="P:establishment of meiotic spindle localization"/>
    <property type="evidence" value="ECO:0007669"/>
    <property type="project" value="Ensembl"/>
</dbReference>
<dbReference type="GO" id="GO:0001768">
    <property type="term" value="P:establishment of T cell polarity"/>
    <property type="evidence" value="ECO:0007669"/>
    <property type="project" value="Ensembl"/>
</dbReference>
<dbReference type="GO" id="GO:0001701">
    <property type="term" value="P:in utero embryonic development"/>
    <property type="evidence" value="ECO:0007669"/>
    <property type="project" value="Ensembl"/>
</dbReference>
<dbReference type="GO" id="GO:0007229">
    <property type="term" value="P:integrin-mediated signaling pathway"/>
    <property type="evidence" value="ECO:0000303"/>
    <property type="project" value="UniProtKB"/>
</dbReference>
<dbReference type="GO" id="GO:0050900">
    <property type="term" value="P:leukocyte migration"/>
    <property type="evidence" value="ECO:0000303"/>
    <property type="project" value="UniProtKB"/>
</dbReference>
<dbReference type="GO" id="GO:0032418">
    <property type="term" value="P:lysosome localization"/>
    <property type="evidence" value="ECO:0000315"/>
    <property type="project" value="UniProtKB"/>
</dbReference>
<dbReference type="GO" id="GO:0000212">
    <property type="term" value="P:meiotic spindle organization"/>
    <property type="evidence" value="ECO:0007669"/>
    <property type="project" value="Ensembl"/>
</dbReference>
<dbReference type="GO" id="GO:0006509">
    <property type="term" value="P:membrane protein ectodomain proteolysis"/>
    <property type="evidence" value="ECO:0000314"/>
    <property type="project" value="UniProtKB"/>
</dbReference>
<dbReference type="GO" id="GO:0030224">
    <property type="term" value="P:monocyte differentiation"/>
    <property type="evidence" value="ECO:0000270"/>
    <property type="project" value="UniProtKB"/>
</dbReference>
<dbReference type="GO" id="GO:0007520">
    <property type="term" value="P:myoblast fusion"/>
    <property type="evidence" value="ECO:0007669"/>
    <property type="project" value="Ensembl"/>
</dbReference>
<dbReference type="GO" id="GO:1903919">
    <property type="term" value="P:negative regulation of actin filament severing"/>
    <property type="evidence" value="ECO:0000315"/>
    <property type="project" value="UniProtKB"/>
</dbReference>
<dbReference type="GO" id="GO:0006911">
    <property type="term" value="P:phagocytosis, engulfment"/>
    <property type="evidence" value="ECO:0000250"/>
    <property type="project" value="UniProtKB"/>
</dbReference>
<dbReference type="GO" id="GO:0001778">
    <property type="term" value="P:plasma membrane repair"/>
    <property type="evidence" value="ECO:0000314"/>
    <property type="project" value="UniProtKB"/>
</dbReference>
<dbReference type="GO" id="GO:0070527">
    <property type="term" value="P:platelet aggregation"/>
    <property type="evidence" value="ECO:0007001"/>
    <property type="project" value="UniProtKB"/>
</dbReference>
<dbReference type="GO" id="GO:0030220">
    <property type="term" value="P:platelet formation"/>
    <property type="evidence" value="ECO:0000315"/>
    <property type="project" value="UniProtKB"/>
</dbReference>
<dbReference type="GO" id="GO:1903923">
    <property type="term" value="P:positive regulation of protein processing in phagocytic vesicle"/>
    <property type="evidence" value="ECO:0000250"/>
    <property type="project" value="UniProtKB"/>
</dbReference>
<dbReference type="GO" id="GO:0015031">
    <property type="term" value="P:protein transport"/>
    <property type="evidence" value="ECO:0000315"/>
    <property type="project" value="UniProtKB"/>
</dbReference>
<dbReference type="GO" id="GO:0045055">
    <property type="term" value="P:regulated exocytosis"/>
    <property type="evidence" value="ECO:0000315"/>
    <property type="project" value="UniProtKB"/>
</dbReference>
<dbReference type="GO" id="GO:0008360">
    <property type="term" value="P:regulation of cell shape"/>
    <property type="evidence" value="ECO:0000315"/>
    <property type="project" value="UniProtKB"/>
</dbReference>
<dbReference type="GO" id="GO:1905684">
    <property type="term" value="P:regulation of plasma membrane repair"/>
    <property type="evidence" value="ECO:0000315"/>
    <property type="project" value="UniProtKB"/>
</dbReference>
<dbReference type="GO" id="GO:0046718">
    <property type="term" value="P:symbiont entry into host cell"/>
    <property type="evidence" value="ECO:0000314"/>
    <property type="project" value="UniProt"/>
</dbReference>
<dbReference type="GO" id="GO:0032796">
    <property type="term" value="P:uropod organization"/>
    <property type="evidence" value="ECO:0007669"/>
    <property type="project" value="Ensembl"/>
</dbReference>
<dbReference type="FunFam" id="2.30.30.360:FF:000001">
    <property type="entry name" value="Myosin heavy chain"/>
    <property type="match status" value="1"/>
</dbReference>
<dbReference type="FunFam" id="3.30.70.1590:FF:000001">
    <property type="entry name" value="Myosin heavy chain"/>
    <property type="match status" value="1"/>
</dbReference>
<dbReference type="FunFam" id="1.10.10.820:FF:000002">
    <property type="entry name" value="Myosin heavy chain 10"/>
    <property type="match status" value="1"/>
</dbReference>
<dbReference type="FunFam" id="1.20.120.720:FF:000002">
    <property type="entry name" value="Myosin heavy chain 10"/>
    <property type="match status" value="1"/>
</dbReference>
<dbReference type="FunFam" id="1.20.5.4820:FF:000002">
    <property type="entry name" value="Myosin heavy chain 10"/>
    <property type="match status" value="1"/>
</dbReference>
<dbReference type="FunFam" id="1.20.58.530:FF:000003">
    <property type="entry name" value="Myosin heavy chain 10"/>
    <property type="match status" value="1"/>
</dbReference>
<dbReference type="FunFam" id="1.20.5.340:FF:000008">
    <property type="entry name" value="Myosin heavy chain 11"/>
    <property type="match status" value="1"/>
</dbReference>
<dbReference type="FunFam" id="3.40.850.10:FF:000175">
    <property type="entry name" value="Myosin heavy chain 9"/>
    <property type="match status" value="1"/>
</dbReference>
<dbReference type="FunFam" id="1.20.5.340:FF:000007">
    <property type="entry name" value="Myosin heavy chain, non-muscle"/>
    <property type="match status" value="1"/>
</dbReference>
<dbReference type="FunFam" id="4.10.270.10:FF:000001">
    <property type="entry name" value="Myosin heavy chain, non-muscle"/>
    <property type="match status" value="1"/>
</dbReference>
<dbReference type="FunFam" id="1.20.5.340:FF:000009">
    <property type="entry name" value="myosin-11 isoform X2"/>
    <property type="match status" value="1"/>
</dbReference>
<dbReference type="Gene3D" id="1.10.10.820">
    <property type="match status" value="1"/>
</dbReference>
<dbReference type="Gene3D" id="1.20.5.340">
    <property type="match status" value="5"/>
</dbReference>
<dbReference type="Gene3D" id="1.20.58.530">
    <property type="match status" value="1"/>
</dbReference>
<dbReference type="Gene3D" id="3.30.70.1590">
    <property type="match status" value="1"/>
</dbReference>
<dbReference type="Gene3D" id="6.10.250.2420">
    <property type="match status" value="1"/>
</dbReference>
<dbReference type="Gene3D" id="3.40.850.10">
    <property type="entry name" value="Kinesin motor domain"/>
    <property type="match status" value="1"/>
</dbReference>
<dbReference type="Gene3D" id="2.30.30.360">
    <property type="entry name" value="Myosin S1 fragment, N-terminal"/>
    <property type="match status" value="1"/>
</dbReference>
<dbReference type="Gene3D" id="1.20.120.720">
    <property type="entry name" value="Myosin VI head, motor domain, U50 subdomain"/>
    <property type="match status" value="1"/>
</dbReference>
<dbReference type="Gene3D" id="4.10.270.10">
    <property type="entry name" value="Myosin, subunit A"/>
    <property type="match status" value="1"/>
</dbReference>
<dbReference type="InterPro" id="IPR000048">
    <property type="entry name" value="IQ_motif_EF-hand-BS"/>
</dbReference>
<dbReference type="InterPro" id="IPR036961">
    <property type="entry name" value="Kinesin_motor_dom_sf"/>
</dbReference>
<dbReference type="InterPro" id="IPR001609">
    <property type="entry name" value="Myosin_head_motor_dom-like"/>
</dbReference>
<dbReference type="InterPro" id="IPR004009">
    <property type="entry name" value="Myosin_N"/>
</dbReference>
<dbReference type="InterPro" id="IPR008989">
    <property type="entry name" value="Myosin_S1_N"/>
</dbReference>
<dbReference type="InterPro" id="IPR002928">
    <property type="entry name" value="Myosin_tail"/>
</dbReference>
<dbReference type="InterPro" id="IPR027417">
    <property type="entry name" value="P-loop_NTPase"/>
</dbReference>
<dbReference type="InterPro" id="IPR036305">
    <property type="entry name" value="RGS_sf"/>
</dbReference>
<dbReference type="PANTHER" id="PTHR45615">
    <property type="entry name" value="MYOSIN HEAVY CHAIN, NON-MUSCLE"/>
    <property type="match status" value="1"/>
</dbReference>
<dbReference type="PANTHER" id="PTHR45615:SF16">
    <property type="entry name" value="MYOSIN-9"/>
    <property type="match status" value="1"/>
</dbReference>
<dbReference type="Pfam" id="PF00063">
    <property type="entry name" value="Myosin_head"/>
    <property type="match status" value="1"/>
</dbReference>
<dbReference type="Pfam" id="PF02736">
    <property type="entry name" value="Myosin_N"/>
    <property type="match status" value="1"/>
</dbReference>
<dbReference type="Pfam" id="PF01576">
    <property type="entry name" value="Myosin_tail_1"/>
    <property type="match status" value="1"/>
</dbReference>
<dbReference type="PRINTS" id="PR00193">
    <property type="entry name" value="MYOSINHEAVY"/>
</dbReference>
<dbReference type="SMART" id="SM00015">
    <property type="entry name" value="IQ"/>
    <property type="match status" value="1"/>
</dbReference>
<dbReference type="SMART" id="SM00242">
    <property type="entry name" value="MYSc"/>
    <property type="match status" value="1"/>
</dbReference>
<dbReference type="SUPFAM" id="SSF90257">
    <property type="entry name" value="Myosin rod fragments"/>
    <property type="match status" value="6"/>
</dbReference>
<dbReference type="SUPFAM" id="SSF52540">
    <property type="entry name" value="P-loop containing nucleoside triphosphate hydrolases"/>
    <property type="match status" value="1"/>
</dbReference>
<dbReference type="SUPFAM" id="SSF48097">
    <property type="entry name" value="Regulator of G-protein signaling, RGS"/>
    <property type="match status" value="1"/>
</dbReference>
<dbReference type="PROSITE" id="PS50096">
    <property type="entry name" value="IQ"/>
    <property type="match status" value="1"/>
</dbReference>
<dbReference type="PROSITE" id="PS51456">
    <property type="entry name" value="MYOSIN_MOTOR"/>
    <property type="match status" value="1"/>
</dbReference>
<dbReference type="PROSITE" id="PS51844">
    <property type="entry name" value="SH3_LIKE"/>
    <property type="match status" value="1"/>
</dbReference>
<feature type="initiator methionine" description="Removed" evidence="38">
    <location>
        <position position="1"/>
    </location>
</feature>
<feature type="chain" id="PRO_0000123416" description="Myosin-9">
    <location>
        <begin position="2"/>
        <end position="1960"/>
    </location>
</feature>
<feature type="domain" description="Myosin N-terminal SH3-like" evidence="8">
    <location>
        <begin position="27"/>
        <end position="77"/>
    </location>
</feature>
<feature type="domain" description="Myosin motor" evidence="7">
    <location>
        <begin position="81"/>
        <end position="776"/>
    </location>
</feature>
<feature type="domain" description="IQ" evidence="6">
    <location>
        <begin position="779"/>
        <end position="808"/>
    </location>
</feature>
<feature type="region of interest" description="Mediates interaction with LIMCH1" evidence="34">
    <location>
        <begin position="2"/>
        <end position="838"/>
    </location>
</feature>
<feature type="region of interest" description="Actin-binding">
    <location>
        <begin position="654"/>
        <end position="676"/>
    </location>
</feature>
<feature type="region of interest" description="Disordered" evidence="9">
    <location>
        <begin position="1035"/>
        <end position="1057"/>
    </location>
</feature>
<feature type="region of interest" description="Disordered" evidence="9">
    <location>
        <begin position="1118"/>
        <end position="1137"/>
    </location>
</feature>
<feature type="region of interest" description="Disordered" evidence="9">
    <location>
        <begin position="1877"/>
        <end position="1960"/>
    </location>
</feature>
<feature type="coiled-coil region" evidence="5">
    <location>
        <begin position="837"/>
        <end position="1926"/>
    </location>
</feature>
<feature type="compositionally biased region" description="Basic and acidic residues" evidence="9">
    <location>
        <begin position="1035"/>
        <end position="1055"/>
    </location>
</feature>
<feature type="compositionally biased region" description="Basic and acidic residues" evidence="9">
    <location>
        <begin position="1122"/>
        <end position="1137"/>
    </location>
</feature>
<feature type="compositionally biased region" description="Basic and acidic residues" evidence="9">
    <location>
        <begin position="1948"/>
        <end position="1960"/>
    </location>
</feature>
<feature type="binding site" evidence="5">
    <location>
        <begin position="174"/>
        <end position="181"/>
    </location>
    <ligand>
        <name>ATP</name>
        <dbReference type="ChEBI" id="CHEBI:30616"/>
    </ligand>
</feature>
<feature type="modified residue" description="N-acetylalanine" evidence="38">
    <location>
        <position position="2"/>
    </location>
</feature>
<feature type="modified residue" description="N6-acetyllysine" evidence="49">
    <location>
        <position position="8"/>
    </location>
</feature>
<feature type="modified residue" description="Phosphotyrosine" evidence="50">
    <location>
        <position position="11"/>
    </location>
</feature>
<feature type="modified residue" description="N6-acetyllysine" evidence="49">
    <location>
        <position position="102"/>
    </location>
</feature>
<feature type="modified residue" description="N6-acetyllysine" evidence="49">
    <location>
        <position position="299"/>
    </location>
</feature>
<feature type="modified residue" description="N6-acetyllysine" evidence="1">
    <location>
        <position position="435"/>
    </location>
</feature>
<feature type="modified residue" description="N6-acetyllysine" evidence="4">
    <location>
        <position position="613"/>
    </location>
</feature>
<feature type="modified residue" description="Phosphoserine" evidence="54">
    <location>
        <position position="628"/>
    </location>
</feature>
<feature type="modified residue" description="Phosphotyrosine" evidence="53">
    <location>
        <position position="754"/>
    </location>
</feature>
<feature type="modified residue" description="N6-succinyllysine" evidence="4">
    <location>
        <position position="850"/>
    </location>
</feature>
<feature type="modified residue" description="N6-acetyllysine" evidence="4">
    <location>
        <position position="860"/>
    </location>
</feature>
<feature type="modified residue" description="N6-acetyllysine" evidence="4">
    <location>
        <position position="975"/>
    </location>
</feature>
<feature type="modified residue" description="N6-acetyllysine" evidence="49">
    <location>
        <position position="1024"/>
    </location>
</feature>
<feature type="modified residue" description="Phosphoserine" evidence="4">
    <location>
        <position position="1114"/>
    </location>
</feature>
<feature type="modified residue" description="N6-acetyllysine" evidence="2">
    <location>
        <position position="1234"/>
    </location>
</feature>
<feature type="modified residue" description="N6-acetyllysine" evidence="4">
    <location>
        <position position="1249"/>
    </location>
</feature>
<feature type="modified residue" description="N6-acetyllysine" evidence="49">
    <location>
        <position position="1357"/>
    </location>
</feature>
<feature type="modified residue" description="N6-acetyllysine" evidence="49">
    <location>
        <position position="1392"/>
    </location>
</feature>
<feature type="modified residue" description="N6-acetyllysine" evidence="49">
    <location>
        <position position="1404"/>
    </location>
</feature>
<feature type="modified residue" description="N6-acetyllysine" evidence="49">
    <location>
        <position position="1410"/>
    </location>
</feature>
<feature type="modified residue" description="N6-acetyllysine" evidence="49">
    <location>
        <position position="1459"/>
    </location>
</feature>
<feature type="modified residue" description="N6-acetyllysine" evidence="49">
    <location>
        <position position="1638"/>
    </location>
</feature>
<feature type="modified residue" description="N6-succinyllysine" evidence="4">
    <location>
        <position position="1669"/>
    </location>
</feature>
<feature type="modified residue" description="Phosphoserine" evidence="51 53">
    <location>
        <position position="1714"/>
    </location>
</feature>
<feature type="modified residue" description="N6-acetyllysine" evidence="4">
    <location>
        <position position="1793"/>
    </location>
</feature>
<feature type="modified residue" description="N6-acetyllysine" evidence="4">
    <location>
        <position position="1802"/>
    </location>
</feature>
<feature type="modified residue" description="N6-acetyllysine" evidence="4">
    <location>
        <position position="1845"/>
    </location>
</feature>
<feature type="modified residue" description="Omega-N-methylarginine" evidence="2">
    <location>
        <position position="1923"/>
    </location>
</feature>
<feature type="modified residue" description="Phosphoserine" evidence="42 43 44 45 46 47 48 50 51 52 53 54">
    <location>
        <position position="1943"/>
    </location>
</feature>
<feature type="splice variant" id="VSP_035409" description="In isoform 2." evidence="39">
    <location>
        <begin position="1"/>
        <end position="136"/>
    </location>
</feature>
<feature type="splice variant" id="VSP_035410" description="In isoform 2." evidence="39">
    <location>
        <begin position="980"/>
        <end position="1421"/>
    </location>
</feature>
<feature type="sequence variant" id="VAR_010791" description="In MATINS; dbSNP:rs121913655." evidence="10">
    <original>N</original>
    <variation>K</variation>
    <location>
        <position position="93"/>
    </location>
</feature>
<feature type="sequence variant" id="VAR_018308" description="In MATINS; dbSNP:rs1603484047." evidence="15">
    <original>A</original>
    <variation>T</variation>
    <location>
        <position position="95"/>
    </location>
</feature>
<feature type="sequence variant" id="VAR_018309" description="In MATINS; dbSNP:rs121913657." evidence="14 25">
    <original>S</original>
    <variation>L</variation>
    <location>
        <position position="96"/>
    </location>
</feature>
<feature type="sequence variant" id="VAR_018310" description="In MATINS; dbSNP:rs1603483388." evidence="13">
    <original>K</original>
    <variation>N</variation>
    <location>
        <position position="373"/>
    </location>
</feature>
<feature type="sequence variant" id="VAR_010792" description="In MATINS; dbSNP:rs80338826." evidence="10 13 20">
    <original>R</original>
    <variation>C</variation>
    <location>
        <position position="702"/>
    </location>
</feature>
<feature type="sequence variant" id="VAR_018311" description="In MATINS; dbSNP:rs80338827." evidence="13 16 20">
    <original>R</original>
    <variation>H</variation>
    <location>
        <position position="702"/>
    </location>
</feature>
<feature type="sequence variant" id="VAR_010793" description="In DFNA17; dbSNP:rs80338828." evidence="12">
    <original>R</original>
    <variation>H</variation>
    <location>
        <position position="705"/>
    </location>
</feature>
<feature type="sequence variant" id="VAR_036006" description="In a breast cancer sample; somatic mutation; dbSNP:rs2146345143." evidence="24">
    <original>K</original>
    <variation>N</variation>
    <location>
        <position position="810"/>
    </location>
</feature>
<feature type="sequence variant" id="VAR_044226" description="In MATINS; dbSNP:rs554332083." evidence="20">
    <original>K</original>
    <variation>Q</variation>
    <location>
        <position position="910"/>
    </location>
</feature>
<feature type="sequence variant" id="VAR_044227" description="In dbSNP:rs16996652.">
    <original>V</original>
    <variation>E</variation>
    <location>
        <position position="967"/>
    </location>
</feature>
<feature type="sequence variant" id="VAR_044228" description="In MATINS." evidence="20">
    <location>
        <begin position="1066"/>
        <end position="1072"/>
    </location>
</feature>
<feature type="sequence variant" id="VAR_018312" description="In MATINS; dbSNP:rs200901330." evidence="13">
    <original>S</original>
    <variation>P</variation>
    <location>
        <position position="1114"/>
    </location>
</feature>
<feature type="sequence variant" id="VAR_010794" description="In MATINS; dbSNP:rs121913656." evidence="11 20">
    <original>T</original>
    <variation>I</variation>
    <location>
        <position position="1155"/>
    </location>
</feature>
<feature type="sequence variant" id="VAR_010795" description="In MATINS; dbSNP:rs80338829." evidence="10 15 17">
    <original>R</original>
    <variation>C</variation>
    <location>
        <position position="1165"/>
    </location>
</feature>
<feature type="sequence variant" id="VAR_018313" description="In MATINS; dbSNP:rs80338830." evidence="14 15 17">
    <original>R</original>
    <variation>L</variation>
    <location>
        <position position="1165"/>
    </location>
</feature>
<feature type="sequence variant" id="VAR_018314" description="In MATINS." evidence="15 17">
    <location>
        <begin position="1205"/>
        <end position="1207"/>
    </location>
</feature>
<feature type="sequence variant" id="VAR_083825" description="In DFNA17; uncertain significance; dbSNP:rs746956415." evidence="36">
    <original>E</original>
    <variation>K</variation>
    <location>
        <position position="1228"/>
    </location>
</feature>
<feature type="sequence variant" id="VAR_018315" description="In MATINS; likely benign; dbSNP:rs76368635." evidence="14">
    <original>R</original>
    <variation>W</variation>
    <location>
        <position position="1400"/>
    </location>
</feature>
<feature type="sequence variant" id="VAR_010796" description="In MATINS; dbSNP:rs80338831." evidence="10 13 15 17 20">
    <original>D</original>
    <variation>H</variation>
    <location>
        <position position="1424"/>
    </location>
</feature>
<feature type="sequence variant" id="VAR_018316" description="In MATINS; results in reduced protein levels; dbSNP:rs80338831." evidence="13 14 15 17 18 19 20">
    <original>D</original>
    <variation>N</variation>
    <location>
        <position position="1424"/>
    </location>
</feature>
<feature type="sequence variant" id="VAR_018317" description="In MATINS; dbSNP:rs80338831." evidence="15 17">
    <original>D</original>
    <variation>Y</variation>
    <location>
        <position position="1424"/>
    </location>
</feature>
<feature type="sequence variant" id="VAR_018318" description="In dbSNP:rs2269529." evidence="15">
    <original>I</original>
    <variation>V</variation>
    <location>
        <position position="1626"/>
    </location>
</feature>
<feature type="sequence variant" id="VAR_030385" description="In MATINS; dbSNP:rs762773112." evidence="17">
    <original>I</original>
    <variation>V</variation>
    <location>
        <position position="1816"/>
    </location>
</feature>
<feature type="sequence variant" id="VAR_010797" description="In MATINS; dbSNP:rs80338834." evidence="10 11 13 14 15 17">
    <original>E</original>
    <variation>K</variation>
    <location>
        <position position="1841"/>
    </location>
</feature>
<feature type="sequence conflict" description="In Ref. 9." evidence="41" ref="9">
    <original>EAI</original>
    <variation>RGH</variation>
    <location>
        <begin position="53"/>
        <end position="55"/>
    </location>
</feature>
<feature type="sequence conflict" description="In Ref. 9." evidence="41" ref="9">
    <original>T</original>
    <variation>S</variation>
    <location>
        <position position="660"/>
    </location>
</feature>
<feature type="sequence conflict" description="In Ref. 11; AAA36349." evidence="41" ref="11">
    <original>T</original>
    <variation>M</variation>
    <location>
        <position position="869"/>
    </location>
</feature>
<feature type="sequence conflict" description="In Ref. 11; AAA36349." evidence="41" ref="11">
    <original>C</original>
    <variation>Y</variation>
    <location>
        <position position="931"/>
    </location>
</feature>
<feature type="sequence conflict" description="In Ref. 8; BAF84298." evidence="41" ref="8">
    <original>R</original>
    <variation>I</variation>
    <location>
        <position position="1000"/>
    </location>
</feature>
<feature type="sequence conflict" description="In Ref. 11; AAA36349." evidence="41" ref="11">
    <original>KG</original>
    <variation>GR</variation>
    <location>
        <begin position="1240"/>
        <end position="1241"/>
    </location>
</feature>
<feature type="sequence conflict" description="In Ref. 11." evidence="41" ref="11">
    <original>E</original>
    <variation>EE</variation>
    <location>
        <position position="1350"/>
    </location>
</feature>
<feature type="sequence conflict" description="In Ref. 1; CAD89954." evidence="41" ref="1">
    <original>E</original>
    <variation>G</variation>
    <location>
        <position position="1462"/>
    </location>
</feature>
<feature type="sequence conflict" description="In Ref. 1; CAD89954." evidence="41" ref="1">
    <original>D</original>
    <variation>G</variation>
    <location>
        <position position="1546"/>
    </location>
</feature>
<feature type="sequence conflict" description="In Ref. 11; AAA36349." evidence="41" ref="11">
    <original>T</original>
    <variation>A</variation>
    <location>
        <position position="1764"/>
    </location>
</feature>
<feature type="sequence conflict" description="In Ref. 11; AAA36349." evidence="41" ref="11">
    <original>S</original>
    <variation>G</variation>
    <location>
        <position position="1771"/>
    </location>
</feature>
<feature type="strand" evidence="57">
    <location>
        <begin position="1895"/>
        <end position="1897"/>
    </location>
</feature>
<feature type="helix" evidence="57">
    <location>
        <begin position="1899"/>
        <end position="1903"/>
    </location>
</feature>
<feature type="helix" evidence="56">
    <location>
        <begin position="1904"/>
        <end position="1921"/>
    </location>
</feature>
<feature type="strand" evidence="55">
    <location>
        <begin position="1922"/>
        <end position="1925"/>
    </location>
</feature>
<evidence type="ECO:0000250" key="1">
    <source>
        <dbReference type="UniProtKB" id="P35580"/>
    </source>
</evidence>
<evidence type="ECO:0000250" key="2">
    <source>
        <dbReference type="UniProtKB" id="Q61879"/>
    </source>
</evidence>
<evidence type="ECO:0000250" key="3">
    <source>
        <dbReference type="UniProtKB" id="Q62812"/>
    </source>
</evidence>
<evidence type="ECO:0000250" key="4">
    <source>
        <dbReference type="UniProtKB" id="Q8VDD5"/>
    </source>
</evidence>
<evidence type="ECO:0000255" key="5"/>
<evidence type="ECO:0000255" key="6">
    <source>
        <dbReference type="PROSITE-ProRule" id="PRU00116"/>
    </source>
</evidence>
<evidence type="ECO:0000255" key="7">
    <source>
        <dbReference type="PROSITE-ProRule" id="PRU00782"/>
    </source>
</evidence>
<evidence type="ECO:0000255" key="8">
    <source>
        <dbReference type="PROSITE-ProRule" id="PRU01190"/>
    </source>
</evidence>
<evidence type="ECO:0000256" key="9">
    <source>
        <dbReference type="SAM" id="MobiDB-lite"/>
    </source>
</evidence>
<evidence type="ECO:0000269" key="10">
    <source>
    </source>
</evidence>
<evidence type="ECO:0000269" key="11">
    <source>
    </source>
</evidence>
<evidence type="ECO:0000269" key="12">
    <source>
    </source>
</evidence>
<evidence type="ECO:0000269" key="13">
    <source>
    </source>
</evidence>
<evidence type="ECO:0000269" key="14">
    <source>
    </source>
</evidence>
<evidence type="ECO:0000269" key="15">
    <source>
    </source>
</evidence>
<evidence type="ECO:0000269" key="16">
    <source>
    </source>
</evidence>
<evidence type="ECO:0000269" key="17">
    <source>
    </source>
</evidence>
<evidence type="ECO:0000269" key="18">
    <source>
    </source>
</evidence>
<evidence type="ECO:0000269" key="19">
    <source>
    </source>
</evidence>
<evidence type="ECO:0000269" key="20">
    <source>
    </source>
</evidence>
<evidence type="ECO:0000269" key="21">
    <source>
    </source>
</evidence>
<evidence type="ECO:0000269" key="22">
    <source>
    </source>
</evidence>
<evidence type="ECO:0000269" key="23">
    <source>
    </source>
</evidence>
<evidence type="ECO:0000269" key="24">
    <source>
    </source>
</evidence>
<evidence type="ECO:0000269" key="25">
    <source>
    </source>
</evidence>
<evidence type="ECO:0000269" key="26">
    <source>
    </source>
</evidence>
<evidence type="ECO:0000269" key="27">
    <source>
    </source>
</evidence>
<evidence type="ECO:0000269" key="28">
    <source>
    </source>
</evidence>
<evidence type="ECO:0000269" key="29">
    <source>
    </source>
</evidence>
<evidence type="ECO:0000269" key="30">
    <source>
    </source>
</evidence>
<evidence type="ECO:0000269" key="31">
    <source>
    </source>
</evidence>
<evidence type="ECO:0000269" key="32">
    <source>
    </source>
</evidence>
<evidence type="ECO:0000269" key="33">
    <source>
    </source>
</evidence>
<evidence type="ECO:0000269" key="34">
    <source>
    </source>
</evidence>
<evidence type="ECO:0000269" key="35">
    <source>
    </source>
</evidence>
<evidence type="ECO:0000269" key="36">
    <source>
    </source>
</evidence>
<evidence type="ECO:0000269" key="37">
    <source>
    </source>
</evidence>
<evidence type="ECO:0000269" key="38">
    <source ref="10"/>
</evidence>
<evidence type="ECO:0000303" key="39">
    <source>
    </source>
</evidence>
<evidence type="ECO:0000303" key="40">
    <source>
    </source>
</evidence>
<evidence type="ECO:0000305" key="41"/>
<evidence type="ECO:0007744" key="42">
    <source>
    </source>
</evidence>
<evidence type="ECO:0007744" key="43">
    <source>
    </source>
</evidence>
<evidence type="ECO:0007744" key="44">
    <source>
    </source>
</evidence>
<evidence type="ECO:0007744" key="45">
    <source>
    </source>
</evidence>
<evidence type="ECO:0007744" key="46">
    <source>
    </source>
</evidence>
<evidence type="ECO:0007744" key="47">
    <source>
    </source>
</evidence>
<evidence type="ECO:0007744" key="48">
    <source>
    </source>
</evidence>
<evidence type="ECO:0007744" key="49">
    <source>
    </source>
</evidence>
<evidence type="ECO:0007744" key="50">
    <source>
    </source>
</evidence>
<evidence type="ECO:0007744" key="51">
    <source>
    </source>
</evidence>
<evidence type="ECO:0007744" key="52">
    <source>
    </source>
</evidence>
<evidence type="ECO:0007744" key="53">
    <source>
    </source>
</evidence>
<evidence type="ECO:0007744" key="54">
    <source>
    </source>
</evidence>
<evidence type="ECO:0007829" key="55">
    <source>
        <dbReference type="PDB" id="2LNK"/>
    </source>
</evidence>
<evidence type="ECO:0007829" key="56">
    <source>
        <dbReference type="PDB" id="4CFQ"/>
    </source>
</evidence>
<evidence type="ECO:0007829" key="57">
    <source>
        <dbReference type="PDB" id="4CFR"/>
    </source>
</evidence>
<organism>
    <name type="scientific">Homo sapiens</name>
    <name type="common">Human</name>
    <dbReference type="NCBI Taxonomy" id="9606"/>
    <lineage>
        <taxon>Eukaryota</taxon>
        <taxon>Metazoa</taxon>
        <taxon>Chordata</taxon>
        <taxon>Craniata</taxon>
        <taxon>Vertebrata</taxon>
        <taxon>Euteleostomi</taxon>
        <taxon>Mammalia</taxon>
        <taxon>Eutheria</taxon>
        <taxon>Euarchontoglires</taxon>
        <taxon>Primates</taxon>
        <taxon>Haplorrhini</taxon>
        <taxon>Catarrhini</taxon>
        <taxon>Hominidae</taxon>
        <taxon>Homo</taxon>
    </lineage>
</organism>
<protein>
    <recommendedName>
        <fullName>Myosin-9</fullName>
    </recommendedName>
    <alternativeName>
        <fullName>Cellular myosin heavy chain, type A</fullName>
    </alternativeName>
    <alternativeName>
        <fullName>Myosin heavy chain 9</fullName>
    </alternativeName>
    <alternativeName>
        <fullName>Myosin heavy chain, non-muscle IIa</fullName>
    </alternativeName>
    <alternativeName>
        <fullName>Non-muscle myosin heavy chain A</fullName>
        <shortName>NMMHC-A</shortName>
    </alternativeName>
    <alternativeName>
        <fullName evidence="40">Non-muscle myosin heavy chain IIa</fullName>
        <shortName evidence="40">NMMHC II-a</shortName>
        <shortName evidence="40">NMMHC-IIA</shortName>
    </alternativeName>
</protein>
<name>MYH9_HUMAN</name>
<keyword id="KW-0002">3D-structure</keyword>
<keyword id="KW-0007">Acetylation</keyword>
<keyword id="KW-0009">Actin-binding</keyword>
<keyword id="KW-0023">Alport syndrome</keyword>
<keyword id="KW-0025">Alternative splicing</keyword>
<keyword id="KW-0067">ATP-binding</keyword>
<keyword id="KW-0112">Calmodulin-binding</keyword>
<keyword id="KW-0898">Cataract</keyword>
<keyword id="KW-0130">Cell adhesion</keyword>
<keyword id="KW-1003">Cell membrane</keyword>
<keyword id="KW-0133">Cell shape</keyword>
<keyword id="KW-0175">Coiled coil</keyword>
<keyword id="KW-0963">Cytoplasm</keyword>
<keyword id="KW-0968">Cytoplasmic vesicle</keyword>
<keyword id="KW-0206">Cytoskeleton</keyword>
<keyword id="KW-0209">Deafness</keyword>
<keyword id="KW-0903">Direct protein sequencing</keyword>
<keyword id="KW-0225">Disease variant</keyword>
<keyword id="KW-1183">Host cell receptor for virus entry</keyword>
<keyword id="KW-0472">Membrane</keyword>
<keyword id="KW-0488">Methylation</keyword>
<keyword id="KW-0505">Motor protein</keyword>
<keyword id="KW-0518">Myosin</keyword>
<keyword id="KW-1010">Non-syndromic deafness</keyword>
<keyword id="KW-0547">Nucleotide-binding</keyword>
<keyword id="KW-0597">Phosphoprotein</keyword>
<keyword id="KW-1267">Proteomics identification</keyword>
<keyword id="KW-0675">Receptor</keyword>
<keyword id="KW-1185">Reference proteome</keyword>
<keyword id="KW-0832">Ubl conjugation</keyword>
<gene>
    <name type="primary">MYH9</name>
</gene>
<proteinExistence type="evidence at protein level"/>
<sequence>MAQQAADKYLYVDKNFINNPLAQADWAAKKLVWVPSDKSGFEPASLKEEVGEEAIVELVENGKKVKVNKDDIQKMNPPKFSKVEDMAELTCLNEASVLHNLKERYYSGLIYTYSGLFCVVINPYKNLPIYSEEIVEMYKGKKRHEMPPHIYAITDTAYRSMMQDREDQSILCTGESGAGKTENTKKVIQYLAYVASSHKSKKDQGELERQLLQANPILEAFGNAKTVKNDNSSRFGKFIRINFDVNGYIVGANIETYLLEKSRAIRQAKEERTFHIFYYLLSGAGEHLKTDLLLEPYNKYRFLSNGHVTIPGQQDKDMFQETMEAMRIMGIPEEEQMGLLRVISGVLQLGNIVFKKERNTDQASMPDNTAAQKVSHLLGINVTDFTRGILTPRIKVGRDYVQKAQTKEQADFAIEALAKATYERMFRWLVLRINKALDKTKRQGASFIGILDIAGFEIFDLNSFEQLCINYTNEKLQQLFNHTMFILEQEEYQREGIEWNFIDFGLDLQPCIDLIEKPAGPPGILALLDEECWFPKATDKSFVEKVMQEQGTHPKFQKPKQLKDKADFCIIHYAGKVDYKADEWLMKNMDPLNDNIATLLHQSSDKFVSELWKDVDRIIGLDQVAGMSETALPGAFKTRKGMFRTVGQLYKEQLAKLMATLRNTNPNFVRCIIPNHEKKAGKLDPHLVLDQLRCNGVLEGIRICRQGFPNRVVFQEFRQRYEILTPNSIPKGFMDGKQACVLMIKALELDSNLYRIGQSKVFFRAGVLAHLEEERDLKITDVIIGFQACCRGYLARKAFAKRQQQLTAMKVLQRNCAAYLKLRNWQWWRLFTKVKPLLQVSRQEEEMMAKEEELVKVREKQLAAENRLTEMETLQSQLMAEKLQLQEQLQAETELCAEAEELRARLTAKKQELEEICHDLEARVEEEEERCQHLQAEKKKMQQNIQELEEQLEEEESARQKLQLEKVTTEAKLKKLEEEQIILEDQNCKLAKEKKLLEDRIAEFTTNLTEEEEKSKSLAKLKNKHEAMITDLEERLRREEKQRQELEKTRRKLEGDSTDLSDQIAELQAQIAELKMQLAKKEEELQAALARVEEEAAQKNMALKKIRELESQISELQEDLESERASRNKAEKQKRDLGEELEALKTELEDTLDSTAAQQELRSKREQEVNILKKTLEEEAKTHEAQIQEMRQKHSQAVEELAEQLEQTKRVKANLEKAKQTLENERGELANEVKVLLQGKGDSEHKRKKVEAQLQELQVKFNEGERVRTELADKVTKLQVELDNVTGLLSQSDSKSSKLTKDFSALESQLQDTQELLQEENRQKLSLSTKLKQVEDEKNSFREQLEEEEEAKHNLEKQIATLHAQVADMKKKMEDSVGCLETAEEVKRKLQKDLEGLSQRHEEKVAAYDKLEKTKTRLQQELDDLLVDLDHQRQSACNLEKKQKKFDQLLAEEKTISAKYAEERDRAEAEAREKETKALSLARALEEAMEQKAELERLNKQFRTEMEDLMSSKDDVGKSVHELEKSKRALEQQVEEMKTQLEELEDELQATEDAKLRLEVNLQAMKAQFERDLQGRDEQSEEKKKQLVRQVREMEAELEDERKQRSMAVAARKKLEMDLKDLEAHIDSANKNRDEAIKQLRKLQAQMKDCMRELDDTRASREEILAQAKENEKKLKSMEAEMIQLQEELAAAERAKRQAQQERDELADEIANSSGKGALALEEKRRLEARIAQLEEELEEEQGNTELINDRLKKANLQIDQINTDLNLERSHAQKNENARQQLERQNKELKVKLQEMEGTVKSKYKASITALEAKIAQLEEQLDNETKERQAACKQVRRTEKKLKDVLLQVDDERRNAEQYKDQADKASTRLKQLKRQLEEAEEEAQRANASRRKLQRELEDATETADAMNREVSSLKNKLRRGDLPFVVPRRMARKGAGDGSDEEVDGKADGAEAKPAE</sequence>
<accession>P35579</accession>
<accession>A8K6E4</accession>
<accession>O60805</accession>
<accession>Q60FE2</accession>
<accession>Q86T83</accession>